<proteinExistence type="evidence at protein level"/>
<name>SYAC_HUMAN</name>
<organism>
    <name type="scientific">Homo sapiens</name>
    <name type="common">Human</name>
    <dbReference type="NCBI Taxonomy" id="9606"/>
    <lineage>
        <taxon>Eukaryota</taxon>
        <taxon>Metazoa</taxon>
        <taxon>Chordata</taxon>
        <taxon>Craniata</taxon>
        <taxon>Vertebrata</taxon>
        <taxon>Euteleostomi</taxon>
        <taxon>Mammalia</taxon>
        <taxon>Eutheria</taxon>
        <taxon>Euarchontoglires</taxon>
        <taxon>Primates</taxon>
        <taxon>Haplorrhini</taxon>
        <taxon>Catarrhini</taxon>
        <taxon>Hominidae</taxon>
        <taxon>Homo</taxon>
    </lineage>
</organism>
<gene>
    <name evidence="25 27" type="primary">AARS1</name>
    <name evidence="1" type="synonym">AARS</name>
</gene>
<accession>P49588</accession>
<accession>A6NF14</accession>
<accession>B4DR45</accession>
<accession>Q53GV7</accession>
<accession>Q96FA0</accession>
<sequence>MDSTLTASEIRQRFIDFFKRNEHTYVHSSATIPLDDPTLLFANAGMNQFKPIFLNTIDPSHPMAKLSRAANTQKCIRAGGKHNDLDDVGKDVYHHTFFEMLGSWSFGDYFKELACKMALELLTQEFGIPIERLYVTYFGGDEAAGLEADLECKQIWQNLGLDDTKILPGNMKDNFWEMGDTGPCGPCSEIHYDRIGGRDAAHLVNQDDPNVLEIWNLVFIQYNREADGILKPLPKKSIDTGMGLERLVSVLQNKMSNYDTDLFVPYFEAIQKGTGARPYTGKVGAEDADGIDMAYRVLADHARTITVALADGGRPDNTGRGYVLRRILRRAVRYAHEKLNASRGFFATLVDVVVQSLGDAFPELKKDPDMVKDIINEEEVQFLKTLSRGRRILDRKIQSLGDSKTIPGDTAWLLYDTYGFPVDLTGLIAEEKGLVVDMDGFEEERKLAQLKSQGKGAGGEDLIMLDIYAIEELRARGLEVTDDSPKYNYHLDSSGSYVFENTVATVMALRREKMFVEEVSTGQECGVVLDKTCFYAEQGGQIYDEGYLVKVDDSSEDKTEFTVKNAQVRGGYVLHIGTIYGDLKVGDQVWLFIDEPRRRPIMSNHTATHILNFALRSVLGEADQKGSLVAPDRLRFDFTAKGAMSTQQIKKAEEIANEMIEAAKAVYTQDCPLAAAKAIQGLRAVFDETYPDPVRVVSIGVPVSELLDDPSGPAGSLTSVEFCGGTHLRNSSHAGAFVIVTEEAIAKGIRRIVAVTGAEAQKALRKAESLKKCLSVMEAKVKAQTAPNKDVQREIADLGEALATAVIPQWQKDELRETLKSLKKVMDDLDRASKADVQKRVLEKTKQFIDSNPNQPLVILEMESGASAKALNEALKLFKMHSPQTSAMLFTVDNEAGKITCLCQVPQNAANRGLKASEWVQQVSGLMDGKGGGKDVSAQATGKNVGCLQEALQLATSFAQLRLGDVKN</sequence>
<comment type="function">
    <text evidence="9 10 11 12 15 19 20 21">Catalyzes the attachment of alanine to tRNA(Ala) in a two-step reaction: alanine is first activated by ATP to form Ala-AMP and then transferred to the acceptor end of tRNA(Ala) (PubMed:27622773, PubMed:27911835, PubMed:28493438, PubMed:33909043). Also edits incorrectly charged tRNA(Ala) via its editing domain (PubMed:27622773, PubMed:27911835, PubMed:28493438, PubMed:29273753). In presence of high levels of lactate, also acts as a protein lactyltransferase that mediates lactylation of lysine residues in target proteins, such as TEAD1, TP53/p53 and YAP1 (PubMed:38512451, PubMed:38653238). Protein lactylation takes place in a two-step reaction: lactate is first activated by ATP to form lactate-AMP and then transferred to lysine residues of target proteins (PubMed:38512451, PubMed:38653238, PubMed:39322678). Acts as an inhibitor of TP53/p53 activity by catalyzing lactylation of TP53/p53 (PubMed:38653238). Acts as a positive regulator of the Hippo pathway by mediating lactylation of TEAD1 and YAP1 (PubMed:38512451).</text>
</comment>
<comment type="catalytic activity">
    <reaction evidence="1 8 9 10 11">
        <text>tRNA(Ala) + L-alanine + ATP = L-alanyl-tRNA(Ala) + AMP + diphosphate</text>
        <dbReference type="Rhea" id="RHEA:12540"/>
        <dbReference type="Rhea" id="RHEA-COMP:9657"/>
        <dbReference type="Rhea" id="RHEA-COMP:9923"/>
        <dbReference type="ChEBI" id="CHEBI:30616"/>
        <dbReference type="ChEBI" id="CHEBI:33019"/>
        <dbReference type="ChEBI" id="CHEBI:57972"/>
        <dbReference type="ChEBI" id="CHEBI:78442"/>
        <dbReference type="ChEBI" id="CHEBI:78497"/>
        <dbReference type="ChEBI" id="CHEBI:456215"/>
        <dbReference type="EC" id="6.1.1.7"/>
    </reaction>
</comment>
<comment type="catalytic activity">
    <reaction evidence="19 20 21">
        <text>(S)-lactate + ATP + H(+) = (S)-lactoyl-AMP + diphosphate</text>
        <dbReference type="Rhea" id="RHEA:80271"/>
        <dbReference type="ChEBI" id="CHEBI:15378"/>
        <dbReference type="ChEBI" id="CHEBI:16651"/>
        <dbReference type="ChEBI" id="CHEBI:30616"/>
        <dbReference type="ChEBI" id="CHEBI:33019"/>
        <dbReference type="ChEBI" id="CHEBI:231470"/>
    </reaction>
    <physiologicalReaction direction="left-to-right" evidence="19 20 21">
        <dbReference type="Rhea" id="RHEA:80272"/>
    </physiologicalReaction>
</comment>
<comment type="catalytic activity">
    <reaction evidence="19 20 21">
        <text>(S)-lactoyl-AMP + L-lysyl-[protein] = N(6)-[(S)-lactoyl]-L-lysyl-[protein] + AMP + 2 H(+)</text>
        <dbReference type="Rhea" id="RHEA:80275"/>
        <dbReference type="Rhea" id="RHEA-COMP:9752"/>
        <dbReference type="Rhea" id="RHEA-COMP:19466"/>
        <dbReference type="ChEBI" id="CHEBI:15378"/>
        <dbReference type="ChEBI" id="CHEBI:29969"/>
        <dbReference type="ChEBI" id="CHEBI:231470"/>
        <dbReference type="ChEBI" id="CHEBI:231527"/>
        <dbReference type="ChEBI" id="CHEBI:456215"/>
    </reaction>
    <physiologicalReaction direction="left-to-right" evidence="19 20 21">
        <dbReference type="Rhea" id="RHEA:80276"/>
    </physiologicalReaction>
</comment>
<comment type="cofactor">
    <cofactor evidence="1">
        <name>Zn(2+)</name>
        <dbReference type="ChEBI" id="CHEBI:29105"/>
    </cofactor>
    <text evidence="1">Binds 1 zinc ion per subunit.</text>
</comment>
<comment type="activity regulation">
    <text evidence="20">The protein lactyltransferase activity is inhibited by beta-alanine.</text>
</comment>
<comment type="biophysicochemical properties">
    <kinetics>
        <KM evidence="8">3.1 uM for tRNA(Ala) (at 37 Celsius)</KM>
        <text evidence="8">kcat is 0.4 sec(-1).</text>
    </kinetics>
</comment>
<comment type="subunit">
    <text evidence="1 10">Monomer (PubMed:27911835). Interacts with ANKRD16; the interaction is direct (By similarity).</text>
</comment>
<comment type="subcellular location">
    <subcellularLocation>
        <location evidence="1 10 19">Cytoplasm</location>
    </subcellularLocation>
    <subcellularLocation>
        <location evidence="19">Nucleus</location>
    </subcellularLocation>
    <text evidence="19">Translocates to the nucleus in response to increased levels of lactate; nuclear translocation is dependent on KPNA4.</text>
</comment>
<comment type="alternative products">
    <event type="alternative splicing"/>
    <isoform>
        <id>P49588-1</id>
        <name>1</name>
        <sequence type="displayed"/>
    </isoform>
    <isoform>
        <id>P49588-2</id>
        <name>2</name>
        <sequence type="described" ref="VSP_057201 VSP_057202"/>
    </isoform>
</comment>
<comment type="domain">
    <text evidence="1">Consists of three domains; the N-terminal catalytic domain, the editing domain and the C-terminal C-Ala domain. The editing domain removes incorrectly charged amino acids, while the C-Ala domain, along with tRNA(Ala), serves as a bridge to cooperatively bring together the editing and aminoacylation centers thus stimulating deacylation of misacylated tRNAs.</text>
</comment>
<comment type="domain">
    <text evidence="3 10">The C-terminal C-Ala domain (residues 756 to 968) is not required for catalytic activity and can bind DNA (in vitro) (PubMed:27911835). The C-terminal C-Ala domain (residues 756 to 968), along with tRNA(Ala), serves as a bridge to cooperatively bring together the editing and aminoacylation centers thus stimulating deacylation of misacylated tRNAs. The human domain can be used in vitro to replace the corresponding domain in E.coli (PubMed:19661429).</text>
</comment>
<comment type="PTM">
    <text evidence="1 2">ISGylated.</text>
</comment>
<comment type="PTM">
    <text evidence="14">Methylation at 'Lys-943' by METTL21C.</text>
</comment>
<comment type="disease" evidence="4 5 6 16 17">
    <disease id="DI-02678">
        <name>Charcot-Marie-Tooth disease, axonal, type 2N</name>
        <acronym>CMT2N</acronym>
        <description>An axonal form of Charcot-Marie-Tooth disease, a disorder of the peripheral nervous system, characterized by progressive weakness and atrophy, initially of the peroneal muscles and later of the distal muscles of the arms. Charcot-Marie-Tooth disease is classified in two main groups on the basis of electrophysiologic properties and histopathology: primary peripheral demyelinating neuropathies (designated CMT1 when they are dominantly inherited) and primary peripheral axonal neuropathies (CMT2). Neuropathies of the CMT2 group are characterized by signs of axonal degeneration in the absence of obvious myelin alterations, normal or slightly reduced nerve conduction velocities, and progressive distal muscle weakness and atrophy.</description>
        <dbReference type="MIM" id="613287"/>
    </disease>
    <text>The disease is caused by variants affecting the gene represented in this entry.</text>
</comment>
<comment type="disease" evidence="8 11">
    <disease id="DI-04412">
        <name>Developmental and epileptic encephalopathy 29</name>
        <acronym>DEE29</acronym>
        <description>A form of epileptic encephalopathy, a heterogeneous group of severe early-onset epilepsies characterized by refractory seizures, neurodevelopmental impairment, and poor prognosis. Development is normal prior to seizure onset, after which cognitive and motor delays become apparent. DEE29 patients manifest severe infantile epileptic encephalopathy, clubfoot, absent deep tendon reflexes, extrapyramidal symptoms, and persistently deficient myelination.</description>
        <dbReference type="MIM" id="616339"/>
    </disease>
    <text>The disease is caused by variants affecting the gene represented in this entry.</text>
</comment>
<comment type="disease" evidence="13 18">
    <disease id="DI-06298">
        <name>Leukoencephalopathy, hereditary diffuse, with spheroids 2</name>
        <acronym>HDLS2</acronym>
        <description>An autosomal dominant neurodegenerative disorder characterized by progressive cognitive and executive dysfunction, psychiatric disturbances, and neurologic symptoms, such as gait abnormalities, paresis, seizures, and rigidity. Symptom onset is usually in adulthood, although earlier onset has been reported. Some patients have an acute encephalopathic course with severe neurologic decline resulting in early death, whereas other patients have a more protracted and chronic disease course. Neuropathologic examination shows a leukoencephalopathy with axonal spheroids and myelination defects.</description>
        <dbReference type="MIM" id="619661"/>
    </disease>
    <text>The disease may be caused by variants affecting the gene represented in this entry.</text>
</comment>
<comment type="disease" evidence="15">
    <disease id="DI-06299">
        <name>Trichothiodystrophy 8, non-photosensitive</name>
        <acronym>TTD8</acronym>
        <description>A form of trichothiodystrophy, a disease characterized by sulfur-deficient brittle hair and multisystem variable abnormalities. The spectrum of clinical features varies from mild disease with only hair involvement to severe disease with cutaneous, neurologic and profound developmental defects. Ichthyosis, intellectual and developmental disabilities, decreased fertility, abnormal characteristics at birth, ocular abnormalities, short stature, and infections are common manifestations. There are both photosensitive and non-photosensitive forms of the disorder. TTD8 is an autosomal recessive, non-photosensitive form characterized by brittle hair and nails, scaly skin, accompanied by failure to thrive, microcephaly, and neuromotor developmental delay.</description>
        <dbReference type="MIM" id="619691"/>
    </disease>
    <text>The disease may be caused by variants affecting the gene represented in this entry.</text>
</comment>
<comment type="similarity">
    <text evidence="1">Belongs to the class-II aminoacyl-tRNA synthetase family.</text>
</comment>
<protein>
    <recommendedName>
        <fullName evidence="1">Alanine--tRNA ligase, cytoplasmic</fullName>
        <ecNumber evidence="1 8 9 10 11">6.1.1.7</ecNumber>
    </recommendedName>
    <alternativeName>
        <fullName evidence="1">Alanyl-tRNA synthetase</fullName>
        <shortName evidence="1">AlaRS</shortName>
    </alternativeName>
    <alternativeName>
        <fullName evidence="26">Protein lactyltransferase AARS1</fullName>
        <ecNumber evidence="19 20 21">6.-.-.-</ecNumber>
    </alternativeName>
    <alternativeName>
        <fullName>Renal carcinoma antigen NY-REN-42</fullName>
    </alternativeName>
</protein>
<evidence type="ECO:0000255" key="1">
    <source>
        <dbReference type="HAMAP-Rule" id="MF_03133"/>
    </source>
</evidence>
<evidence type="ECO:0000269" key="2">
    <source>
    </source>
</evidence>
<evidence type="ECO:0000269" key="3">
    <source>
    </source>
</evidence>
<evidence type="ECO:0000269" key="4">
    <source>
    </source>
</evidence>
<evidence type="ECO:0000269" key="5">
    <source>
    </source>
</evidence>
<evidence type="ECO:0000269" key="6">
    <source>
    </source>
</evidence>
<evidence type="ECO:0000269" key="7">
    <source>
    </source>
</evidence>
<evidence type="ECO:0000269" key="8">
    <source>
    </source>
</evidence>
<evidence type="ECO:0000269" key="9">
    <source>
    </source>
</evidence>
<evidence type="ECO:0000269" key="10">
    <source>
    </source>
</evidence>
<evidence type="ECO:0000269" key="11">
    <source>
    </source>
</evidence>
<evidence type="ECO:0000269" key="12">
    <source>
    </source>
</evidence>
<evidence type="ECO:0000269" key="13">
    <source>
    </source>
</evidence>
<evidence type="ECO:0000269" key="14">
    <source>
    </source>
</evidence>
<evidence type="ECO:0000269" key="15">
    <source>
    </source>
</evidence>
<evidence type="ECO:0000269" key="16">
    <source>
    </source>
</evidence>
<evidence type="ECO:0000269" key="17">
    <source>
    </source>
</evidence>
<evidence type="ECO:0000269" key="18">
    <source>
    </source>
</evidence>
<evidence type="ECO:0000269" key="19">
    <source>
    </source>
</evidence>
<evidence type="ECO:0000269" key="20">
    <source>
    </source>
</evidence>
<evidence type="ECO:0000269" key="21">
    <source>
    </source>
</evidence>
<evidence type="ECO:0000269" key="22">
    <source ref="27"/>
</evidence>
<evidence type="ECO:0000269" key="23">
    <source ref="7"/>
</evidence>
<evidence type="ECO:0000303" key="24">
    <source>
    </source>
</evidence>
<evidence type="ECO:0000303" key="25">
    <source>
    </source>
</evidence>
<evidence type="ECO:0000305" key="26"/>
<evidence type="ECO:0000312" key="27">
    <source>
        <dbReference type="HGNC" id="HGNC:20"/>
    </source>
</evidence>
<evidence type="ECO:0007744" key="28">
    <source>
        <dbReference type="PDB" id="4XEM"/>
    </source>
</evidence>
<evidence type="ECO:0007744" key="29">
    <source>
        <dbReference type="PDB" id="4XEO"/>
    </source>
</evidence>
<evidence type="ECO:0007744" key="30">
    <source>
        <dbReference type="PDB" id="5KNN"/>
    </source>
</evidence>
<evidence type="ECO:0007744" key="31">
    <source>
        <dbReference type="PDB" id="5T5S"/>
    </source>
</evidence>
<evidence type="ECO:0007744" key="32">
    <source>
        <dbReference type="PDB" id="5T76"/>
    </source>
</evidence>
<evidence type="ECO:0007744" key="33">
    <source>
        <dbReference type="PDB" id="5V59"/>
    </source>
</evidence>
<evidence type="ECO:0007744" key="34">
    <source>
    </source>
</evidence>
<evidence type="ECO:0007744" key="35">
    <source>
    </source>
</evidence>
<evidence type="ECO:0007744" key="36">
    <source>
    </source>
</evidence>
<evidence type="ECO:0007744" key="37">
    <source>
    </source>
</evidence>
<evidence type="ECO:0007744" key="38">
    <source>
    </source>
</evidence>
<evidence type="ECO:0007744" key="39">
    <source>
    </source>
</evidence>
<evidence type="ECO:0007744" key="40">
    <source>
    </source>
</evidence>
<evidence type="ECO:0007829" key="41">
    <source>
        <dbReference type="PDB" id="4XEM"/>
    </source>
</evidence>
<evidence type="ECO:0007829" key="42">
    <source>
        <dbReference type="PDB" id="4XEO"/>
    </source>
</evidence>
<evidence type="ECO:0007829" key="43">
    <source>
        <dbReference type="PDB" id="5KNN"/>
    </source>
</evidence>
<evidence type="ECO:0007829" key="44">
    <source>
        <dbReference type="PDB" id="5T76"/>
    </source>
</evidence>
<feature type="chain" id="PRO_0000075281" description="Alanine--tRNA ligase, cytoplasmic">
    <location>
        <begin position="1"/>
        <end position="968"/>
    </location>
</feature>
<feature type="short sequence motif" description="Nuclear localization signal" evidence="19">
    <location>
        <begin position="750"/>
        <end position="763"/>
    </location>
</feature>
<feature type="binding site" evidence="9 22 28 29 30">
    <location>
        <position position="77"/>
    </location>
    <ligand>
        <name>ATP</name>
        <dbReference type="ChEBI" id="CHEBI:30616"/>
    </ligand>
</feature>
<feature type="binding site" evidence="9 22 28 29 30">
    <location>
        <position position="95"/>
    </location>
    <ligand>
        <name>ATP</name>
        <dbReference type="ChEBI" id="CHEBI:30616"/>
    </ligand>
</feature>
<feature type="binding site" evidence="9 22 28 29 30">
    <location>
        <position position="176"/>
    </location>
    <ligand>
        <name>ATP</name>
        <dbReference type="ChEBI" id="CHEBI:30616"/>
    </ligand>
</feature>
<feature type="binding site" evidence="9 22 28 29 30">
    <location>
        <begin position="214"/>
        <end position="216"/>
    </location>
    <ligand>
        <name>ATP</name>
        <dbReference type="ChEBI" id="CHEBI:30616"/>
    </ligand>
</feature>
<feature type="binding site" evidence="9 22 28 29 30">
    <location>
        <position position="216"/>
    </location>
    <ligand>
        <name>L-alanine</name>
        <dbReference type="ChEBI" id="CHEBI:57972"/>
    </ligand>
</feature>
<feature type="binding site" evidence="9 22 28 29 30">
    <location>
        <position position="239"/>
    </location>
    <ligand>
        <name>L-alanine</name>
        <dbReference type="ChEBI" id="CHEBI:57972"/>
    </ligand>
</feature>
<feature type="binding site" evidence="9 22 28 29 30">
    <location>
        <position position="243"/>
    </location>
    <ligand>
        <name>ATP</name>
        <dbReference type="ChEBI" id="CHEBI:30616"/>
    </ligand>
</feature>
<feature type="binding site" evidence="1">
    <location>
        <position position="605"/>
    </location>
    <ligand>
        <name>Zn(2+)</name>
        <dbReference type="ChEBI" id="CHEBI:29105"/>
    </ligand>
</feature>
<feature type="binding site" evidence="1">
    <location>
        <position position="609"/>
    </location>
    <ligand>
        <name>Zn(2+)</name>
        <dbReference type="ChEBI" id="CHEBI:29105"/>
    </ligand>
</feature>
<feature type="binding site" evidence="1">
    <location>
        <position position="723"/>
    </location>
    <ligand>
        <name>Zn(2+)</name>
        <dbReference type="ChEBI" id="CHEBI:29105"/>
    </ligand>
</feature>
<feature type="binding site" evidence="1">
    <location>
        <position position="727"/>
    </location>
    <ligand>
        <name>Zn(2+)</name>
        <dbReference type="ChEBI" id="CHEBI:29105"/>
    </ligand>
</feature>
<feature type="modified residue" description="N-acetylmethionine" evidence="1 23 35 38 39">
    <location>
        <position position="1"/>
    </location>
</feature>
<feature type="modified residue" description="Phosphoserine" evidence="40">
    <location>
        <position position="3"/>
    </location>
</feature>
<feature type="modified residue" description="Phosphoserine" evidence="40">
    <location>
        <position position="8"/>
    </location>
</feature>
<feature type="modified residue" description="N6-acetyllysine" evidence="36">
    <location>
        <position position="19"/>
    </location>
</feature>
<feature type="modified residue" description="Phosphoserine" evidence="37">
    <location>
        <position position="399"/>
    </location>
</feature>
<feature type="modified residue" description="Phosphoserine" evidence="34 40">
    <location>
        <position position="555"/>
    </location>
</feature>
<feature type="modified residue" description="N6-acetyllysine" evidence="36">
    <location>
        <position position="876"/>
    </location>
</feature>
<feature type="modified residue" description="N6,N6,N6-trimethyllysine; alternate" evidence="14">
    <location>
        <position position="943"/>
    </location>
</feature>
<feature type="modified residue" description="N6,N6-dimethyllysine; alternate" evidence="14">
    <location>
        <position position="943"/>
    </location>
</feature>
<feature type="modified residue" description="N6-methyllysine; alternate" evidence="14">
    <location>
        <position position="943"/>
    </location>
</feature>
<feature type="splice variant" id="VSP_057201" description="In isoform 2." evidence="24">
    <original>G</original>
    <variation>GTYLYSFVR</variation>
    <location>
        <position position="160"/>
    </location>
</feature>
<feature type="splice variant" id="VSP_057202" description="In isoform 2." evidence="24">
    <original>K</original>
    <variation>KATQGPGSPPLGLISSL</variation>
    <location>
        <position position="869"/>
    </location>
</feature>
<feature type="sequence variant" id="VAR_067084" description="In CMT2N; dbSNP:rs387906792." evidence="6">
    <original>N</original>
    <variation>Y</variation>
    <location>
        <position position="71"/>
    </location>
</feature>
<feature type="sequence variant" id="VAR_089575" description="In a gastric cancer; somatic mutation; increased protein lactyltransferase activity." evidence="19">
    <original>R</original>
    <variation>Q</variation>
    <location>
        <position position="77"/>
    </location>
</feature>
<feature type="sequence variant" id="VAR_073719" description="In DEE29; hypomorphic allele; results in only 2-fold reduction in aminoacylation efficiency; dbSNP:rs786205157." evidence="8">
    <original>K</original>
    <variation>T</variation>
    <location>
        <position position="81"/>
    </location>
</feature>
<feature type="sequence variant" id="VAR_086780" description="In HDLS2; uncertain significance." evidence="13">
    <original>C</original>
    <variation>F</variation>
    <location>
        <position position="152"/>
    </location>
</feature>
<feature type="sequence variant" id="VAR_028204" description="In dbSNP:rs11537667.">
    <original>G</original>
    <variation>D</variation>
    <location>
        <position position="275"/>
    </location>
</feature>
<feature type="sequence variant" id="VAR_089576" description="In CMT2N." evidence="17">
    <original>R</original>
    <variation>W</variation>
    <location>
        <position position="326"/>
    </location>
</feature>
<feature type="sequence variant" id="VAR_063527" description="In CMT2N; severely reduces enzyme activity; dbSNP:rs267606621." evidence="4 5">
    <original>R</original>
    <variation>H</variation>
    <location>
        <position position="329"/>
    </location>
</feature>
<feature type="sequence variant" id="VAR_089577" description="In HDLS2; likely pathogenic." evidence="18">
    <original>T</original>
    <variation>I</variation>
    <location>
        <position position="606"/>
    </location>
</feature>
<feature type="sequence variant" id="VAR_073293" description="Found in a patient with distal hereditary motor neuropathy; uncertain significance." evidence="7">
    <original>T</original>
    <variation>M</variation>
    <location>
        <position position="608"/>
    </location>
</feature>
<feature type="sequence variant" id="VAR_089578" description="In CMT2N." evidence="16">
    <original>S</original>
    <variation>F</variation>
    <location>
        <position position="698"/>
    </location>
</feature>
<feature type="sequence variant" id="VAR_086781" description="In TTD8; uncertain significance." evidence="15">
    <original>I</original>
    <variation>T</variation>
    <location>
        <position position="699"/>
    </location>
</feature>
<feature type="sequence variant" id="VAR_086782" description="In TTD8; uncertain significance." evidence="15">
    <original>T</original>
    <variation>A</variation>
    <location>
        <position position="726"/>
    </location>
</feature>
<feature type="sequence variant" id="VAR_073720" description="In DEE29; results in 10-fold reduction in aminoacylation efficiency; dbSNP:rs143370729." evidence="8">
    <original>R</original>
    <variation>G</variation>
    <location>
        <position position="751"/>
    </location>
</feature>
<feature type="sequence variant" id="VAR_086783" description="In TTD8; uncertain significance." evidence="15">
    <original>T</original>
    <variation>I</variation>
    <location>
        <position position="756"/>
    </location>
</feature>
<feature type="sequence variant" id="VAR_086784" description="In TTD8; uncertain significance." evidence="15">
    <original>C</original>
    <variation>Y</variation>
    <location>
        <position position="901"/>
    </location>
</feature>
<feature type="sequence variant" id="VAR_079703" description="In DEE29; decreases protein abundance; decreases aminoacylation activity; no effect on the editing activity; dbSNP:rs369774476." evidence="11">
    <original>G</original>
    <variation>D</variation>
    <location>
        <position position="913"/>
    </location>
</feature>
<feature type="mutagenesis site" description="In mutant 5A; abolished binding to lactate and protein lactylation; when associated with A-77, A-216 and 239-A--A-241." evidence="20 21">
    <original>M</original>
    <variation>A</variation>
    <location>
        <position position="46"/>
    </location>
</feature>
<feature type="mutagenesis site" description="In mutant 5A; abolished binding to lactate and protein lactylation; when associated with A-46, A-216 and 239-A--A-241. In mutant 5M; abolished binding to lactate and protein lactylation; when associated with A-100, E-176, D-218 and A-239. In ATP-binding mutant; abolished ability to mediate protein lactylation; when associated with A-176 and A-243." evidence="19 20 21">
    <original>R</original>
    <variation>A</variation>
    <location>
        <position position="77"/>
    </location>
</feature>
<feature type="mutagenesis site" description="In mutant 5M; abolished binding to lactate and protein lactylation; when associated with A-77, E-176, D-218 and A-239." evidence="19">
    <original>M</original>
    <variation>A</variation>
    <location>
        <position position="100"/>
    </location>
</feature>
<feature type="mutagenesis site" description="In ATP-binding mutant; abolished ability to mediate protein lactylation; when associated with A-77 and A-243." evidence="21">
    <original>W</original>
    <variation>A</variation>
    <location>
        <position position="176"/>
    </location>
</feature>
<feature type="mutagenesis site" description="In mutant 5M; abolished binding to lactate and protein lactylation; when associated with A-77, A-100, D-218 and A-239." evidence="19">
    <original>W</original>
    <variation>E</variation>
    <location>
        <position position="176"/>
    </location>
</feature>
<feature type="mutagenesis site" description="In mutant 5A; abolished binding to lactate and protein lactylation; when associated with A-46, A-77 and 239-A--A-241." evidence="20 21">
    <original>N</original>
    <variation>A</variation>
    <location>
        <position position="216"/>
    </location>
</feature>
<feature type="mutagenesis site" description="In mutant 5M; abolished binding to lactate and protein lactylation; when associated with A-77, A-100, E-176 and A-239." evidence="19">
    <original>V</original>
    <variation>D</variation>
    <location>
        <position position="218"/>
    </location>
</feature>
<feature type="mutagenesis site" description="In mutant 5A; abolished binding to lactate and protein lactylation; when associated with A-46, A-77 and A-216." evidence="20 21">
    <original>DTG</original>
    <variation>ATA</variation>
    <location>
        <begin position="239"/>
        <end position="241"/>
    </location>
</feature>
<feature type="mutagenesis site" description="In mutant 5M; abolished binding to lactate and protein lactylation; when associated with A-77, A-100, E-176 and D-218." evidence="19">
    <original>D</original>
    <variation>A</variation>
    <location>
        <position position="239"/>
    </location>
</feature>
<feature type="mutagenesis site" description="In ATP-binding mutant; abolished ability to mediate protein lactylation; when associated with A-77 and A-176." evidence="21">
    <original>G</original>
    <variation>A</variation>
    <location>
        <position position="243"/>
    </location>
</feature>
<feature type="mutagenesis site" description="Decreases misincorporation of Cys instead of Ala." evidence="9">
    <original>A</original>
    <variation>Q</variation>
    <location>
        <position position="448"/>
    </location>
</feature>
<feature type="mutagenesis site" description="Decreases editing activity." evidence="11">
    <original>C</original>
    <variation>A</variation>
    <location>
        <position position="723"/>
    </location>
</feature>
<feature type="mutagenesis site" description="Abolished nuclear translocation in presence of lactate." evidence="19">
    <location>
        <begin position="750"/>
        <end position="763"/>
    </location>
</feature>
<feature type="mutagenesis site" description="Abrogates METTL21C methylation of AARS1." evidence="14">
    <original>K</original>
    <variation>A</variation>
    <location>
        <position position="943"/>
    </location>
</feature>
<feature type="sequence conflict" description="In Ref. 1; BAA06808." evidence="26" ref="1">
    <original>H</original>
    <variation>Q</variation>
    <location>
        <position position="82"/>
    </location>
</feature>
<feature type="sequence conflict" description="In Ref. 2; BAG61157." evidence="26" ref="2">
    <original>Y</original>
    <variation>C</variation>
    <location>
        <position position="334"/>
    </location>
</feature>
<feature type="sequence conflict" description="In Ref. 2; BAG61157." evidence="26" ref="2">
    <original>A</original>
    <variation>T</variation>
    <location>
        <position position="763"/>
    </location>
</feature>
<feature type="sequence conflict" description="In Ref. 3; BAD96544." evidence="26" ref="3">
    <original>S</original>
    <variation>T</variation>
    <location>
        <position position="867"/>
    </location>
</feature>
<feature type="helix" evidence="41">
    <location>
        <begin position="7"/>
        <end position="20"/>
    </location>
</feature>
<feature type="strand" evidence="43">
    <location>
        <begin position="34"/>
        <end position="36"/>
    </location>
</feature>
<feature type="helix" evidence="41">
    <location>
        <begin position="45"/>
        <end position="49"/>
    </location>
</feature>
<feature type="helix" evidence="41">
    <location>
        <begin position="50"/>
        <end position="53"/>
    </location>
</feature>
<feature type="helix" evidence="41">
    <location>
        <begin position="62"/>
        <end position="65"/>
    </location>
</feature>
<feature type="strand" evidence="41">
    <location>
        <begin position="68"/>
        <end position="76"/>
    </location>
</feature>
<feature type="strand" evidence="42">
    <location>
        <begin position="78"/>
        <end position="81"/>
    </location>
</feature>
<feature type="helix" evidence="41">
    <location>
        <begin position="85"/>
        <end position="87"/>
    </location>
</feature>
<feature type="strand" evidence="41">
    <location>
        <begin position="90"/>
        <end position="93"/>
    </location>
</feature>
<feature type="strand" evidence="41">
    <location>
        <begin position="96"/>
        <end position="109"/>
    </location>
</feature>
<feature type="helix" evidence="41">
    <location>
        <begin position="111"/>
        <end position="123"/>
    </location>
</feature>
<feature type="helix" evidence="41">
    <location>
        <begin position="130"/>
        <end position="132"/>
    </location>
</feature>
<feature type="strand" evidence="41">
    <location>
        <begin position="133"/>
        <end position="138"/>
    </location>
</feature>
<feature type="helix" evidence="41">
    <location>
        <begin position="142"/>
        <end position="144"/>
    </location>
</feature>
<feature type="helix" evidence="41">
    <location>
        <begin position="150"/>
        <end position="158"/>
    </location>
</feature>
<feature type="helix" evidence="41">
    <location>
        <begin position="163"/>
        <end position="165"/>
    </location>
</feature>
<feature type="strand" evidence="41">
    <location>
        <begin position="166"/>
        <end position="169"/>
    </location>
</feature>
<feature type="helix" evidence="41">
    <location>
        <begin position="171"/>
        <end position="174"/>
    </location>
</feature>
<feature type="strand" evidence="41">
    <location>
        <begin position="178"/>
        <end position="195"/>
    </location>
</feature>
<feature type="helix" evidence="41">
    <location>
        <begin position="201"/>
        <end position="203"/>
    </location>
</feature>
<feature type="turn" evidence="41">
    <location>
        <begin position="204"/>
        <end position="207"/>
    </location>
</feature>
<feature type="strand" evidence="41">
    <location>
        <begin position="211"/>
        <end position="224"/>
    </location>
</feature>
<feature type="strand" evidence="41">
    <location>
        <begin position="230"/>
        <end position="243"/>
    </location>
</feature>
<feature type="helix" evidence="41">
    <location>
        <begin position="244"/>
        <end position="251"/>
    </location>
</feature>
<feature type="helix" evidence="41">
    <location>
        <begin position="257"/>
        <end position="259"/>
    </location>
</feature>
<feature type="turn" evidence="41">
    <location>
        <begin position="261"/>
        <end position="263"/>
    </location>
</feature>
<feature type="helix" evidence="41">
    <location>
        <begin position="264"/>
        <end position="274"/>
    </location>
</feature>
<feature type="helix" evidence="41">
    <location>
        <begin position="284"/>
        <end position="286"/>
    </location>
</feature>
<feature type="helix" evidence="41">
    <location>
        <begin position="291"/>
        <end position="310"/>
    </location>
</feature>
<feature type="helix" evidence="41">
    <location>
        <begin position="319"/>
        <end position="339"/>
    </location>
</feature>
<feature type="turn" evidence="41">
    <location>
        <begin position="343"/>
        <end position="345"/>
    </location>
</feature>
<feature type="helix" evidence="41">
    <location>
        <begin position="346"/>
        <end position="349"/>
    </location>
</feature>
<feature type="helix" evidence="41">
    <location>
        <begin position="350"/>
        <end position="357"/>
    </location>
</feature>
<feature type="turn" evidence="41">
    <location>
        <begin position="358"/>
        <end position="360"/>
    </location>
</feature>
<feature type="helix" evidence="41">
    <location>
        <begin position="362"/>
        <end position="365"/>
    </location>
</feature>
<feature type="helix" evidence="41">
    <location>
        <begin position="368"/>
        <end position="383"/>
    </location>
</feature>
<feature type="helix" evidence="43">
    <location>
        <begin position="386"/>
        <end position="399"/>
    </location>
</feature>
<feature type="turn" evidence="43">
    <location>
        <begin position="400"/>
        <end position="402"/>
    </location>
</feature>
<feature type="helix" evidence="43">
    <location>
        <begin position="408"/>
        <end position="416"/>
    </location>
</feature>
<feature type="helix" evidence="43">
    <location>
        <begin position="422"/>
        <end position="431"/>
    </location>
</feature>
<feature type="helix" evidence="43">
    <location>
        <begin position="438"/>
        <end position="450"/>
    </location>
</feature>
<feature type="helix" evidence="44">
    <location>
        <begin position="759"/>
        <end position="782"/>
    </location>
</feature>
<feature type="helix" evidence="44">
    <location>
        <begin position="789"/>
        <end position="804"/>
    </location>
</feature>
<feature type="helix" evidence="44">
    <location>
        <begin position="809"/>
        <end position="851"/>
    </location>
</feature>
<feature type="strand" evidence="44">
    <location>
        <begin position="856"/>
        <end position="861"/>
    </location>
</feature>
<feature type="helix" evidence="44">
    <location>
        <begin position="868"/>
        <end position="881"/>
    </location>
</feature>
<feature type="strand" evidence="44">
    <location>
        <begin position="886"/>
        <end position="893"/>
    </location>
</feature>
<feature type="turn" evidence="44">
    <location>
        <begin position="894"/>
        <end position="897"/>
    </location>
</feature>
<feature type="strand" evidence="44">
    <location>
        <begin position="898"/>
        <end position="904"/>
    </location>
</feature>
<feature type="helix" evidence="44">
    <location>
        <begin position="907"/>
        <end position="912"/>
    </location>
</feature>
<feature type="helix" evidence="44">
    <location>
        <begin position="916"/>
        <end position="924"/>
    </location>
</feature>
<feature type="turn" evidence="44">
    <location>
        <begin position="925"/>
        <end position="928"/>
    </location>
</feature>
<feature type="strand" evidence="44">
    <location>
        <begin position="929"/>
        <end position="933"/>
    </location>
</feature>
<feature type="strand" evidence="44">
    <location>
        <begin position="935"/>
        <end position="943"/>
    </location>
</feature>
<feature type="helix" evidence="44">
    <location>
        <begin position="945"/>
        <end position="947"/>
    </location>
</feature>
<feature type="helix" evidence="44">
    <location>
        <begin position="948"/>
        <end position="960"/>
    </location>
</feature>
<keyword id="KW-0002">3D-structure</keyword>
<keyword id="KW-0007">Acetylation</keyword>
<keyword id="KW-0025">Alternative splicing</keyword>
<keyword id="KW-0030">Aminoacyl-tRNA synthetase</keyword>
<keyword id="KW-0067">ATP-binding</keyword>
<keyword id="KW-0144">Charcot-Marie-Tooth disease</keyword>
<keyword id="KW-0963">Cytoplasm</keyword>
<keyword id="KW-0903">Direct protein sequencing</keyword>
<keyword id="KW-0225">Disease variant</keyword>
<keyword id="KW-0887">Epilepsy</keyword>
<keyword id="KW-0436">Ligase</keyword>
<keyword id="KW-0479">Metal-binding</keyword>
<keyword id="KW-0488">Methylation</keyword>
<keyword id="KW-0523">Neurodegeneration</keyword>
<keyword id="KW-0622">Neuropathy</keyword>
<keyword id="KW-0547">Nucleotide-binding</keyword>
<keyword id="KW-0539">Nucleus</keyword>
<keyword id="KW-0597">Phosphoprotein</keyword>
<keyword id="KW-0648">Protein biosynthesis</keyword>
<keyword id="KW-1267">Proteomics identification</keyword>
<keyword id="KW-1185">Reference proteome</keyword>
<keyword id="KW-0694">RNA-binding</keyword>
<keyword id="KW-0820">tRNA-binding</keyword>
<keyword id="KW-0832">Ubl conjugation</keyword>
<keyword id="KW-0862">Zinc</keyword>
<dbReference type="EC" id="6.1.1.7" evidence="1 8 9 10 11"/>
<dbReference type="EC" id="6.-.-.-" evidence="19 20 21"/>
<dbReference type="EMBL" id="D32050">
    <property type="protein sequence ID" value="BAA06808.1"/>
    <property type="molecule type" value="mRNA"/>
</dbReference>
<dbReference type="EMBL" id="AK299098">
    <property type="protein sequence ID" value="BAG61157.1"/>
    <property type="molecule type" value="mRNA"/>
</dbReference>
<dbReference type="EMBL" id="AK222824">
    <property type="protein sequence ID" value="BAD96544.1"/>
    <property type="molecule type" value="mRNA"/>
</dbReference>
<dbReference type="EMBL" id="AC012184">
    <property type="status" value="NOT_ANNOTATED_CDS"/>
    <property type="molecule type" value="Genomic_DNA"/>
</dbReference>
<dbReference type="EMBL" id="CH471241">
    <property type="protein sequence ID" value="EAW51839.1"/>
    <property type="molecule type" value="Genomic_DNA"/>
</dbReference>
<dbReference type="EMBL" id="BC011451">
    <property type="protein sequence ID" value="AAH11451.1"/>
    <property type="molecule type" value="mRNA"/>
</dbReference>
<dbReference type="CCDS" id="CCDS32474.1">
    <molecule id="P49588-1"/>
</dbReference>
<dbReference type="PIR" id="I60107">
    <property type="entry name" value="I60107"/>
</dbReference>
<dbReference type="RefSeq" id="NP_001596.2">
    <molecule id="P49588-1"/>
    <property type="nucleotide sequence ID" value="NM_001605.3"/>
</dbReference>
<dbReference type="PDB" id="4XEM">
    <property type="method" value="X-ray"/>
    <property type="resolution" value="1.28 A"/>
    <property type="chains" value="A=1-455"/>
</dbReference>
<dbReference type="PDB" id="4XEO">
    <property type="method" value="X-ray"/>
    <property type="resolution" value="1.38 A"/>
    <property type="chains" value="A/B=1-455"/>
</dbReference>
<dbReference type="PDB" id="5KNN">
    <property type="method" value="X-ray"/>
    <property type="resolution" value="2.68 A"/>
    <property type="chains" value="A/B/C/D/E/F/G/H=4-453"/>
</dbReference>
<dbReference type="PDB" id="5T5S">
    <property type="method" value="X-ray"/>
    <property type="resolution" value="2.20 A"/>
    <property type="chains" value="A=757-965"/>
</dbReference>
<dbReference type="PDB" id="5T76">
    <property type="method" value="X-ray"/>
    <property type="resolution" value="2.00 A"/>
    <property type="chains" value="A=757-965"/>
</dbReference>
<dbReference type="PDB" id="5V59">
    <property type="method" value="X-ray"/>
    <property type="resolution" value="2.03 A"/>
    <property type="chains" value="A=1-455"/>
</dbReference>
<dbReference type="PDBsum" id="4XEM"/>
<dbReference type="PDBsum" id="4XEO"/>
<dbReference type="PDBsum" id="5KNN"/>
<dbReference type="PDBsum" id="5T5S"/>
<dbReference type="PDBsum" id="5T76"/>
<dbReference type="PDBsum" id="5V59"/>
<dbReference type="SMR" id="P49588"/>
<dbReference type="BioGRID" id="106534">
    <property type="interactions" value="184"/>
</dbReference>
<dbReference type="FunCoup" id="P49588">
    <property type="interactions" value="2430"/>
</dbReference>
<dbReference type="IntAct" id="P49588">
    <property type="interactions" value="38"/>
</dbReference>
<dbReference type="MINT" id="P49588"/>
<dbReference type="STRING" id="9606.ENSP00000261772"/>
<dbReference type="BindingDB" id="P49588"/>
<dbReference type="ChEMBL" id="CHEMBL3574"/>
<dbReference type="DrugBank" id="DB00160">
    <property type="generic name" value="Alanine"/>
</dbReference>
<dbReference type="GlyGen" id="P49588">
    <property type="glycosylation" value="1 site, 1 O-linked glycan (1 site)"/>
</dbReference>
<dbReference type="iPTMnet" id="P49588"/>
<dbReference type="MetOSite" id="P49588"/>
<dbReference type="PhosphoSitePlus" id="P49588"/>
<dbReference type="SwissPalm" id="P49588"/>
<dbReference type="BioMuta" id="AARS"/>
<dbReference type="DMDM" id="115502460"/>
<dbReference type="CPTAC" id="CPTAC-1"/>
<dbReference type="CPTAC" id="CPTAC-2"/>
<dbReference type="jPOST" id="P49588"/>
<dbReference type="MassIVE" id="P49588"/>
<dbReference type="PaxDb" id="9606-ENSP00000261772"/>
<dbReference type="PeptideAtlas" id="P49588"/>
<dbReference type="ProteomicsDB" id="56022">
    <molecule id="P49588-1"/>
</dbReference>
<dbReference type="Pumba" id="P49588"/>
<dbReference type="ABCD" id="P49588">
    <property type="antibodies" value="3 sequenced antibodies"/>
</dbReference>
<dbReference type="Antibodypedia" id="29958">
    <property type="antibodies" value="233 antibodies from 29 providers"/>
</dbReference>
<dbReference type="DNASU" id="16"/>
<dbReference type="Ensembl" id="ENST00000261772.13">
    <molecule id="P49588-1"/>
    <property type="protein sequence ID" value="ENSP00000261772.8"/>
    <property type="gene ID" value="ENSG00000090861.17"/>
</dbReference>
<dbReference type="Ensembl" id="ENST00000674691.1">
    <molecule id="P49588-1"/>
    <property type="protein sequence ID" value="ENSP00000502247.1"/>
    <property type="gene ID" value="ENSG00000090861.17"/>
</dbReference>
<dbReference type="Ensembl" id="ENST00000674963.1">
    <molecule id="P49588-1"/>
    <property type="protein sequence ID" value="ENSP00000501924.1"/>
    <property type="gene ID" value="ENSG00000090861.17"/>
</dbReference>
<dbReference type="Ensembl" id="ENST00000675643.1">
    <molecule id="P49588-1"/>
    <property type="protein sequence ID" value="ENSP00000502797.1"/>
    <property type="gene ID" value="ENSG00000090861.17"/>
</dbReference>
<dbReference type="GeneID" id="16"/>
<dbReference type="KEGG" id="hsa:16"/>
<dbReference type="MANE-Select" id="ENST00000261772.13">
    <property type="protein sequence ID" value="ENSP00000261772.8"/>
    <property type="RefSeq nucleotide sequence ID" value="NM_001605.3"/>
    <property type="RefSeq protein sequence ID" value="NP_001596.2"/>
</dbReference>
<dbReference type="UCSC" id="uc002eyn.2">
    <molecule id="P49588-1"/>
    <property type="organism name" value="human"/>
</dbReference>
<dbReference type="AGR" id="HGNC:20"/>
<dbReference type="CTD" id="16"/>
<dbReference type="DisGeNET" id="16"/>
<dbReference type="GeneCards" id="AARS1"/>
<dbReference type="GeneReviews" id="AARS1"/>
<dbReference type="HGNC" id="HGNC:20">
    <property type="gene designation" value="AARS1"/>
</dbReference>
<dbReference type="HPA" id="ENSG00000090861">
    <property type="expression patterns" value="Low tissue specificity"/>
</dbReference>
<dbReference type="MalaCards" id="AARS1"/>
<dbReference type="MIM" id="601065">
    <property type="type" value="gene"/>
</dbReference>
<dbReference type="MIM" id="613287">
    <property type="type" value="phenotype"/>
</dbReference>
<dbReference type="MIM" id="616339">
    <property type="type" value="phenotype"/>
</dbReference>
<dbReference type="MIM" id="619661">
    <property type="type" value="phenotype"/>
</dbReference>
<dbReference type="MIM" id="619691">
    <property type="type" value="phenotype"/>
</dbReference>
<dbReference type="neXtProt" id="NX_P49588"/>
<dbReference type="OpenTargets" id="ENSG00000090861"/>
<dbReference type="Orphanet" id="228174">
    <property type="disease" value="Autosomal dominant Charcot-Marie-Tooth disease type 2N"/>
</dbReference>
<dbReference type="Orphanet" id="442835">
    <property type="disease" value="Non-specific early-onset epileptic encephalopathy"/>
</dbReference>
<dbReference type="Orphanet" id="33364">
    <property type="disease" value="Trichothiodystrophy"/>
</dbReference>
<dbReference type="PharmGKB" id="PA24367"/>
<dbReference type="VEuPathDB" id="HostDB:ENSG00000090861"/>
<dbReference type="eggNOG" id="KOG0188">
    <property type="taxonomic scope" value="Eukaryota"/>
</dbReference>
<dbReference type="GeneTree" id="ENSGT00940000157335"/>
<dbReference type="HOGENOM" id="CLU_004485_5_0_1"/>
<dbReference type="InParanoid" id="P49588"/>
<dbReference type="OMA" id="NKKDNFW"/>
<dbReference type="OrthoDB" id="2423964at2759"/>
<dbReference type="PAN-GO" id="P49588">
    <property type="GO annotations" value="8 GO annotations based on evolutionary models"/>
</dbReference>
<dbReference type="PhylomeDB" id="P49588"/>
<dbReference type="TreeFam" id="TF300737"/>
<dbReference type="PathwayCommons" id="P49588"/>
<dbReference type="Reactome" id="R-HSA-379716">
    <property type="pathway name" value="Cytosolic tRNA aminoacylation"/>
</dbReference>
<dbReference type="SignaLink" id="P49588"/>
<dbReference type="SIGNOR" id="P49588"/>
<dbReference type="BioGRID-ORCS" id="16">
    <property type="hits" value="818 hits in 1135 CRISPR screens"/>
</dbReference>
<dbReference type="CD-CODE" id="FB4E32DD">
    <property type="entry name" value="Presynaptic clusters and postsynaptic densities"/>
</dbReference>
<dbReference type="ChiTaRS" id="AARS">
    <property type="organism name" value="human"/>
</dbReference>
<dbReference type="GenomeRNAi" id="16"/>
<dbReference type="Pharos" id="P49588">
    <property type="development level" value="Tbio"/>
</dbReference>
<dbReference type="PRO" id="PR:P49588"/>
<dbReference type="Proteomes" id="UP000005640">
    <property type="component" value="Chromosome 16"/>
</dbReference>
<dbReference type="RNAct" id="P49588">
    <property type="molecule type" value="protein"/>
</dbReference>
<dbReference type="Bgee" id="ENSG00000090861">
    <property type="expression patterns" value="Expressed in endometrium epithelium and 213 other cell types or tissues"/>
</dbReference>
<dbReference type="ExpressionAtlas" id="P49588">
    <property type="expression patterns" value="baseline and differential"/>
</dbReference>
<dbReference type="GO" id="GO:0005737">
    <property type="term" value="C:cytoplasm"/>
    <property type="evidence" value="ECO:0000314"/>
    <property type="project" value="UniProtKB"/>
</dbReference>
<dbReference type="GO" id="GO:0005829">
    <property type="term" value="C:cytosol"/>
    <property type="evidence" value="ECO:0000314"/>
    <property type="project" value="HPA"/>
</dbReference>
<dbReference type="GO" id="GO:0070062">
    <property type="term" value="C:extracellular exosome"/>
    <property type="evidence" value="ECO:0007005"/>
    <property type="project" value="UniProtKB"/>
</dbReference>
<dbReference type="GO" id="GO:0016020">
    <property type="term" value="C:membrane"/>
    <property type="evidence" value="ECO:0007005"/>
    <property type="project" value="UniProtKB"/>
</dbReference>
<dbReference type="GO" id="GO:0005739">
    <property type="term" value="C:mitochondrion"/>
    <property type="evidence" value="ECO:0000318"/>
    <property type="project" value="GO_Central"/>
</dbReference>
<dbReference type="GO" id="GO:0005634">
    <property type="term" value="C:nucleus"/>
    <property type="evidence" value="ECO:0000314"/>
    <property type="project" value="UniProtKB"/>
</dbReference>
<dbReference type="GO" id="GO:0004813">
    <property type="term" value="F:alanine-tRNA ligase activity"/>
    <property type="evidence" value="ECO:0000314"/>
    <property type="project" value="UniProtKB"/>
</dbReference>
<dbReference type="GO" id="GO:0016597">
    <property type="term" value="F:amino acid binding"/>
    <property type="evidence" value="ECO:0007669"/>
    <property type="project" value="Ensembl"/>
</dbReference>
<dbReference type="GO" id="GO:0002161">
    <property type="term" value="F:aminoacyl-tRNA deacylase activity"/>
    <property type="evidence" value="ECO:0000314"/>
    <property type="project" value="UniProtKB"/>
</dbReference>
<dbReference type="GO" id="GO:0005524">
    <property type="term" value="F:ATP binding"/>
    <property type="evidence" value="ECO:0007669"/>
    <property type="project" value="UniProtKB-UniRule"/>
</dbReference>
<dbReference type="GO" id="GO:0141207">
    <property type="term" value="F:peptide lactyltransferase (ATP-dependent) activity"/>
    <property type="evidence" value="ECO:0000314"/>
    <property type="project" value="UniProtKB"/>
</dbReference>
<dbReference type="GO" id="GO:0002196">
    <property type="term" value="F:Ser-tRNA(Ala) deacylase activity"/>
    <property type="evidence" value="ECO:0000250"/>
    <property type="project" value="UniProtKB"/>
</dbReference>
<dbReference type="GO" id="GO:0000049">
    <property type="term" value="F:tRNA binding"/>
    <property type="evidence" value="ECO:0000304"/>
    <property type="project" value="ProtInc"/>
</dbReference>
<dbReference type="GO" id="GO:0008270">
    <property type="term" value="F:zinc ion binding"/>
    <property type="evidence" value="ECO:0007669"/>
    <property type="project" value="UniProtKB-UniRule"/>
</dbReference>
<dbReference type="GO" id="GO:0006419">
    <property type="term" value="P:alanyl-tRNA aminoacylation"/>
    <property type="evidence" value="ECO:0000314"/>
    <property type="project" value="UniProtKB"/>
</dbReference>
<dbReference type="GO" id="GO:0021680">
    <property type="term" value="P:cerebellar Purkinje cell layer development"/>
    <property type="evidence" value="ECO:0007669"/>
    <property type="project" value="Ensembl"/>
</dbReference>
<dbReference type="GO" id="GO:0043524">
    <property type="term" value="P:negative regulation of neuron apoptotic process"/>
    <property type="evidence" value="ECO:0007669"/>
    <property type="project" value="Ensembl"/>
</dbReference>
<dbReference type="GO" id="GO:1901797">
    <property type="term" value="P:negative regulation of signal transduction by p53 class mediator"/>
    <property type="evidence" value="ECO:0000314"/>
    <property type="project" value="UniProtKB"/>
</dbReference>
<dbReference type="GO" id="GO:0050885">
    <property type="term" value="P:neuromuscular process controlling balance"/>
    <property type="evidence" value="ECO:0007669"/>
    <property type="project" value="Ensembl"/>
</dbReference>
<dbReference type="GO" id="GO:0051402">
    <property type="term" value="P:neuron apoptotic process"/>
    <property type="evidence" value="ECO:0007669"/>
    <property type="project" value="Ensembl"/>
</dbReference>
<dbReference type="GO" id="GO:0035332">
    <property type="term" value="P:positive regulation of hippo signaling"/>
    <property type="evidence" value="ECO:0000314"/>
    <property type="project" value="UniProtKB"/>
</dbReference>
<dbReference type="GO" id="GO:0140018">
    <property type="term" value="P:regulation of cytoplasmic translational fidelity"/>
    <property type="evidence" value="ECO:0007669"/>
    <property type="project" value="Ensembl"/>
</dbReference>
<dbReference type="GO" id="GO:0006418">
    <property type="term" value="P:tRNA aminoacylation for protein translation"/>
    <property type="evidence" value="ECO:0000304"/>
    <property type="project" value="Reactome"/>
</dbReference>
<dbReference type="GO" id="GO:0006400">
    <property type="term" value="P:tRNA modification"/>
    <property type="evidence" value="ECO:0000250"/>
    <property type="project" value="UniProtKB"/>
</dbReference>
<dbReference type="GO" id="GO:0008033">
    <property type="term" value="P:tRNA processing"/>
    <property type="evidence" value="ECO:0000304"/>
    <property type="project" value="ProtInc"/>
</dbReference>
<dbReference type="CDD" id="cd00673">
    <property type="entry name" value="AlaRS_core"/>
    <property type="match status" value="1"/>
</dbReference>
<dbReference type="FunFam" id="3.30.930.10:FF:000011">
    <property type="entry name" value="Alanine--tRNA ligase, cytoplasmic"/>
    <property type="match status" value="1"/>
</dbReference>
<dbReference type="FunFam" id="3.30.980.10:FF:000004">
    <property type="entry name" value="Alanine--tRNA ligase, cytoplasmic"/>
    <property type="match status" value="1"/>
</dbReference>
<dbReference type="FunFam" id="3.10.310.40:FF:000002">
    <property type="entry name" value="alanine--tRNA ligase, cytoplasmic"/>
    <property type="match status" value="1"/>
</dbReference>
<dbReference type="FunFam" id="2.40.30.130:FF:000026">
    <property type="entry name" value="Alanyl-tRNA synthetase"/>
    <property type="match status" value="1"/>
</dbReference>
<dbReference type="Gene3D" id="2.40.30.130">
    <property type="match status" value="1"/>
</dbReference>
<dbReference type="Gene3D" id="3.10.310.40">
    <property type="match status" value="1"/>
</dbReference>
<dbReference type="Gene3D" id="3.30.930.10">
    <property type="entry name" value="Bira Bifunctional Protein, Domain 2"/>
    <property type="match status" value="1"/>
</dbReference>
<dbReference type="Gene3D" id="3.30.980.10">
    <property type="entry name" value="Threonyl-trna Synthetase, Chain A, domain 2"/>
    <property type="match status" value="1"/>
</dbReference>
<dbReference type="HAMAP" id="MF_00036_B">
    <property type="entry name" value="Ala_tRNA_synth_B"/>
    <property type="match status" value="1"/>
</dbReference>
<dbReference type="InterPro" id="IPR045864">
    <property type="entry name" value="aa-tRNA-synth_II/BPL/LPL"/>
</dbReference>
<dbReference type="InterPro" id="IPR002318">
    <property type="entry name" value="Ala-tRNA-lgiase_IIc"/>
</dbReference>
<dbReference type="InterPro" id="IPR018162">
    <property type="entry name" value="Ala-tRNA-ligase_IIc_anticod-bd"/>
</dbReference>
<dbReference type="InterPro" id="IPR018165">
    <property type="entry name" value="Ala-tRNA-synth_IIc_core"/>
</dbReference>
<dbReference type="InterPro" id="IPR018164">
    <property type="entry name" value="Ala-tRNA-synth_IIc_N"/>
</dbReference>
<dbReference type="InterPro" id="IPR050058">
    <property type="entry name" value="Ala-tRNA_ligase"/>
</dbReference>
<dbReference type="InterPro" id="IPR023033">
    <property type="entry name" value="Ala_tRNA_ligase_euk/bac"/>
</dbReference>
<dbReference type="InterPro" id="IPR003156">
    <property type="entry name" value="DHHA1_dom"/>
</dbReference>
<dbReference type="InterPro" id="IPR018163">
    <property type="entry name" value="Thr/Ala-tRNA-synth_IIc_edit"/>
</dbReference>
<dbReference type="InterPro" id="IPR009000">
    <property type="entry name" value="Transl_B-barrel_sf"/>
</dbReference>
<dbReference type="InterPro" id="IPR012947">
    <property type="entry name" value="tRNA_SAD"/>
</dbReference>
<dbReference type="NCBIfam" id="TIGR00344">
    <property type="entry name" value="alaS"/>
    <property type="match status" value="1"/>
</dbReference>
<dbReference type="PANTHER" id="PTHR11777:SF36">
    <property type="entry name" value="ALANINE--TRNA LIGASE, CYTOPLASMIC"/>
    <property type="match status" value="1"/>
</dbReference>
<dbReference type="PANTHER" id="PTHR11777">
    <property type="entry name" value="ALANYL-TRNA SYNTHETASE"/>
    <property type="match status" value="1"/>
</dbReference>
<dbReference type="Pfam" id="PF02272">
    <property type="entry name" value="DHHA1"/>
    <property type="match status" value="1"/>
</dbReference>
<dbReference type="Pfam" id="PF01411">
    <property type="entry name" value="tRNA-synt_2c"/>
    <property type="match status" value="1"/>
</dbReference>
<dbReference type="Pfam" id="PF07973">
    <property type="entry name" value="tRNA_SAD"/>
    <property type="match status" value="1"/>
</dbReference>
<dbReference type="PRINTS" id="PR00980">
    <property type="entry name" value="TRNASYNTHALA"/>
</dbReference>
<dbReference type="SMART" id="SM00863">
    <property type="entry name" value="tRNA_SAD"/>
    <property type="match status" value="1"/>
</dbReference>
<dbReference type="SUPFAM" id="SSF55681">
    <property type="entry name" value="Class II aaRS and biotin synthetases"/>
    <property type="match status" value="1"/>
</dbReference>
<dbReference type="SUPFAM" id="SSF101353">
    <property type="entry name" value="Putative anticodon-binding domain of alanyl-tRNA synthetase (AlaRS)"/>
    <property type="match status" value="1"/>
</dbReference>
<dbReference type="SUPFAM" id="SSF55186">
    <property type="entry name" value="ThrRS/AlaRS common domain"/>
    <property type="match status" value="1"/>
</dbReference>
<dbReference type="SUPFAM" id="SSF50447">
    <property type="entry name" value="Translation proteins"/>
    <property type="match status" value="1"/>
</dbReference>
<dbReference type="PROSITE" id="PS50860">
    <property type="entry name" value="AA_TRNA_LIGASE_II_ALA"/>
    <property type="match status" value="1"/>
</dbReference>
<reference key="1">
    <citation type="journal article" date="1995" name="Biochemistry">
        <title>Human alanyl-tRNA synthetase: conservation in evolution of catalytic core and microhelix recognition.</title>
        <authorList>
            <person name="Shiba K."/>
            <person name="Ripmaster T.L."/>
            <person name="Suzuki N."/>
            <person name="Nichols R."/>
            <person name="Plotz P."/>
            <person name="Noda T."/>
            <person name="Schimmel P."/>
        </authorList>
    </citation>
    <scope>NUCLEOTIDE SEQUENCE [MRNA] (ISOFORM 1)</scope>
</reference>
<reference key="2">
    <citation type="journal article" date="2004" name="Nat. Genet.">
        <title>Complete sequencing and characterization of 21,243 full-length human cDNAs.</title>
        <authorList>
            <person name="Ota T."/>
            <person name="Suzuki Y."/>
            <person name="Nishikawa T."/>
            <person name="Otsuki T."/>
            <person name="Sugiyama T."/>
            <person name="Irie R."/>
            <person name="Wakamatsu A."/>
            <person name="Hayashi K."/>
            <person name="Sato H."/>
            <person name="Nagai K."/>
            <person name="Kimura K."/>
            <person name="Makita H."/>
            <person name="Sekine M."/>
            <person name="Obayashi M."/>
            <person name="Nishi T."/>
            <person name="Shibahara T."/>
            <person name="Tanaka T."/>
            <person name="Ishii S."/>
            <person name="Yamamoto J."/>
            <person name="Saito K."/>
            <person name="Kawai Y."/>
            <person name="Isono Y."/>
            <person name="Nakamura Y."/>
            <person name="Nagahari K."/>
            <person name="Murakami K."/>
            <person name="Yasuda T."/>
            <person name="Iwayanagi T."/>
            <person name="Wagatsuma M."/>
            <person name="Shiratori A."/>
            <person name="Sudo H."/>
            <person name="Hosoiri T."/>
            <person name="Kaku Y."/>
            <person name="Kodaira H."/>
            <person name="Kondo H."/>
            <person name="Sugawara M."/>
            <person name="Takahashi M."/>
            <person name="Kanda K."/>
            <person name="Yokoi T."/>
            <person name="Furuya T."/>
            <person name="Kikkawa E."/>
            <person name="Omura Y."/>
            <person name="Abe K."/>
            <person name="Kamihara K."/>
            <person name="Katsuta N."/>
            <person name="Sato K."/>
            <person name="Tanikawa M."/>
            <person name="Yamazaki M."/>
            <person name="Ninomiya K."/>
            <person name="Ishibashi T."/>
            <person name="Yamashita H."/>
            <person name="Murakawa K."/>
            <person name="Fujimori K."/>
            <person name="Tanai H."/>
            <person name="Kimata M."/>
            <person name="Watanabe M."/>
            <person name="Hiraoka S."/>
            <person name="Chiba Y."/>
            <person name="Ishida S."/>
            <person name="Ono Y."/>
            <person name="Takiguchi S."/>
            <person name="Watanabe S."/>
            <person name="Yosida M."/>
            <person name="Hotuta T."/>
            <person name="Kusano J."/>
            <person name="Kanehori K."/>
            <person name="Takahashi-Fujii A."/>
            <person name="Hara H."/>
            <person name="Tanase T.-O."/>
            <person name="Nomura Y."/>
            <person name="Togiya S."/>
            <person name="Komai F."/>
            <person name="Hara R."/>
            <person name="Takeuchi K."/>
            <person name="Arita M."/>
            <person name="Imose N."/>
            <person name="Musashino K."/>
            <person name="Yuuki H."/>
            <person name="Oshima A."/>
            <person name="Sasaki N."/>
            <person name="Aotsuka S."/>
            <person name="Yoshikawa Y."/>
            <person name="Matsunawa H."/>
            <person name="Ichihara T."/>
            <person name="Shiohata N."/>
            <person name="Sano S."/>
            <person name="Moriya S."/>
            <person name="Momiyama H."/>
            <person name="Satoh N."/>
            <person name="Takami S."/>
            <person name="Terashima Y."/>
            <person name="Suzuki O."/>
            <person name="Nakagawa S."/>
            <person name="Senoh A."/>
            <person name="Mizoguchi H."/>
            <person name="Goto Y."/>
            <person name="Shimizu F."/>
            <person name="Wakebe H."/>
            <person name="Hishigaki H."/>
            <person name="Watanabe T."/>
            <person name="Sugiyama A."/>
            <person name="Takemoto M."/>
            <person name="Kawakami B."/>
            <person name="Yamazaki M."/>
            <person name="Watanabe K."/>
            <person name="Kumagai A."/>
            <person name="Itakura S."/>
            <person name="Fukuzumi Y."/>
            <person name="Fujimori Y."/>
            <person name="Komiyama M."/>
            <person name="Tashiro H."/>
            <person name="Tanigami A."/>
            <person name="Fujiwara T."/>
            <person name="Ono T."/>
            <person name="Yamada K."/>
            <person name="Fujii Y."/>
            <person name="Ozaki K."/>
            <person name="Hirao M."/>
            <person name="Ohmori Y."/>
            <person name="Kawabata A."/>
            <person name="Hikiji T."/>
            <person name="Kobatake N."/>
            <person name="Inagaki H."/>
            <person name="Ikema Y."/>
            <person name="Okamoto S."/>
            <person name="Okitani R."/>
            <person name="Kawakami T."/>
            <person name="Noguchi S."/>
            <person name="Itoh T."/>
            <person name="Shigeta K."/>
            <person name="Senba T."/>
            <person name="Matsumura K."/>
            <person name="Nakajima Y."/>
            <person name="Mizuno T."/>
            <person name="Morinaga M."/>
            <person name="Sasaki M."/>
            <person name="Togashi T."/>
            <person name="Oyama M."/>
            <person name="Hata H."/>
            <person name="Watanabe M."/>
            <person name="Komatsu T."/>
            <person name="Mizushima-Sugano J."/>
            <person name="Satoh T."/>
            <person name="Shirai Y."/>
            <person name="Takahashi Y."/>
            <person name="Nakagawa K."/>
            <person name="Okumura K."/>
            <person name="Nagase T."/>
            <person name="Nomura N."/>
            <person name="Kikuchi H."/>
            <person name="Masuho Y."/>
            <person name="Yamashita R."/>
            <person name="Nakai K."/>
            <person name="Yada T."/>
            <person name="Nakamura Y."/>
            <person name="Ohara O."/>
            <person name="Isogai T."/>
            <person name="Sugano S."/>
        </authorList>
    </citation>
    <scope>NUCLEOTIDE SEQUENCE [LARGE SCALE MRNA] (ISOFORM 2)</scope>
</reference>
<reference key="3">
    <citation type="submission" date="2005-04" db="EMBL/GenBank/DDBJ databases">
        <authorList>
            <person name="Suzuki Y."/>
            <person name="Sugano S."/>
            <person name="Totoki Y."/>
            <person name="Toyoda A."/>
            <person name="Takeda T."/>
            <person name="Sakaki Y."/>
            <person name="Tanaka A."/>
            <person name="Yokoyama S."/>
        </authorList>
    </citation>
    <scope>NUCLEOTIDE SEQUENCE [LARGE SCALE MRNA] (ISOFORM 1)</scope>
    <source>
        <tissue>Liver</tissue>
    </source>
</reference>
<reference key="4">
    <citation type="journal article" date="2004" name="Nature">
        <title>The sequence and analysis of duplication-rich human chromosome 16.</title>
        <authorList>
            <person name="Martin J."/>
            <person name="Han C."/>
            <person name="Gordon L.A."/>
            <person name="Terry A."/>
            <person name="Prabhakar S."/>
            <person name="She X."/>
            <person name="Xie G."/>
            <person name="Hellsten U."/>
            <person name="Chan Y.M."/>
            <person name="Altherr M."/>
            <person name="Couronne O."/>
            <person name="Aerts A."/>
            <person name="Bajorek E."/>
            <person name="Black S."/>
            <person name="Blumer H."/>
            <person name="Branscomb E."/>
            <person name="Brown N.C."/>
            <person name="Bruno W.J."/>
            <person name="Buckingham J.M."/>
            <person name="Callen D.F."/>
            <person name="Campbell C.S."/>
            <person name="Campbell M.L."/>
            <person name="Campbell E.W."/>
            <person name="Caoile C."/>
            <person name="Challacombe J.F."/>
            <person name="Chasteen L.A."/>
            <person name="Chertkov O."/>
            <person name="Chi H.C."/>
            <person name="Christensen M."/>
            <person name="Clark L.M."/>
            <person name="Cohn J.D."/>
            <person name="Denys M."/>
            <person name="Detter J.C."/>
            <person name="Dickson M."/>
            <person name="Dimitrijevic-Bussod M."/>
            <person name="Escobar J."/>
            <person name="Fawcett J.J."/>
            <person name="Flowers D."/>
            <person name="Fotopulos D."/>
            <person name="Glavina T."/>
            <person name="Gomez M."/>
            <person name="Gonzales E."/>
            <person name="Goodstein D."/>
            <person name="Goodwin L.A."/>
            <person name="Grady D.L."/>
            <person name="Grigoriev I."/>
            <person name="Groza M."/>
            <person name="Hammon N."/>
            <person name="Hawkins T."/>
            <person name="Haydu L."/>
            <person name="Hildebrand C.E."/>
            <person name="Huang W."/>
            <person name="Israni S."/>
            <person name="Jett J."/>
            <person name="Jewett P.B."/>
            <person name="Kadner K."/>
            <person name="Kimball H."/>
            <person name="Kobayashi A."/>
            <person name="Krawczyk M.-C."/>
            <person name="Leyba T."/>
            <person name="Longmire J.L."/>
            <person name="Lopez F."/>
            <person name="Lou Y."/>
            <person name="Lowry S."/>
            <person name="Ludeman T."/>
            <person name="Manohar C.F."/>
            <person name="Mark G.A."/>
            <person name="McMurray K.L."/>
            <person name="Meincke L.J."/>
            <person name="Morgan J."/>
            <person name="Moyzis R.K."/>
            <person name="Mundt M.O."/>
            <person name="Munk A.C."/>
            <person name="Nandkeshwar R.D."/>
            <person name="Pitluck S."/>
            <person name="Pollard M."/>
            <person name="Predki P."/>
            <person name="Parson-Quintana B."/>
            <person name="Ramirez L."/>
            <person name="Rash S."/>
            <person name="Retterer J."/>
            <person name="Ricke D.O."/>
            <person name="Robinson D.L."/>
            <person name="Rodriguez A."/>
            <person name="Salamov A."/>
            <person name="Saunders E.H."/>
            <person name="Scott D."/>
            <person name="Shough T."/>
            <person name="Stallings R.L."/>
            <person name="Stalvey M."/>
            <person name="Sutherland R.D."/>
            <person name="Tapia R."/>
            <person name="Tesmer J.G."/>
            <person name="Thayer N."/>
            <person name="Thompson L.S."/>
            <person name="Tice H."/>
            <person name="Torney D.C."/>
            <person name="Tran-Gyamfi M."/>
            <person name="Tsai M."/>
            <person name="Ulanovsky L.E."/>
            <person name="Ustaszewska A."/>
            <person name="Vo N."/>
            <person name="White P.S."/>
            <person name="Williams A.L."/>
            <person name="Wills P.L."/>
            <person name="Wu J.-R."/>
            <person name="Wu K."/>
            <person name="Yang J."/>
            <person name="DeJong P."/>
            <person name="Bruce D."/>
            <person name="Doggett N.A."/>
            <person name="Deaven L."/>
            <person name="Schmutz J."/>
            <person name="Grimwood J."/>
            <person name="Richardson P."/>
            <person name="Rokhsar D.S."/>
            <person name="Eichler E.E."/>
            <person name="Gilna P."/>
            <person name="Lucas S.M."/>
            <person name="Myers R.M."/>
            <person name="Rubin E.M."/>
            <person name="Pennacchio L.A."/>
        </authorList>
    </citation>
    <scope>NUCLEOTIDE SEQUENCE [LARGE SCALE GENOMIC DNA]</scope>
</reference>
<reference key="5">
    <citation type="submission" date="2005-07" db="EMBL/GenBank/DDBJ databases">
        <authorList>
            <person name="Mural R.J."/>
            <person name="Istrail S."/>
            <person name="Sutton G.G."/>
            <person name="Florea L."/>
            <person name="Halpern A.L."/>
            <person name="Mobarry C.M."/>
            <person name="Lippert R."/>
            <person name="Walenz B."/>
            <person name="Shatkay H."/>
            <person name="Dew I."/>
            <person name="Miller J.R."/>
            <person name="Flanigan M.J."/>
            <person name="Edwards N.J."/>
            <person name="Bolanos R."/>
            <person name="Fasulo D."/>
            <person name="Halldorsson B.V."/>
            <person name="Hannenhalli S."/>
            <person name="Turner R."/>
            <person name="Yooseph S."/>
            <person name="Lu F."/>
            <person name="Nusskern D.R."/>
            <person name="Shue B.C."/>
            <person name="Zheng X.H."/>
            <person name="Zhong F."/>
            <person name="Delcher A.L."/>
            <person name="Huson D.H."/>
            <person name="Kravitz S.A."/>
            <person name="Mouchard L."/>
            <person name="Reinert K."/>
            <person name="Remington K.A."/>
            <person name="Clark A.G."/>
            <person name="Waterman M.S."/>
            <person name="Eichler E.E."/>
            <person name="Adams M.D."/>
            <person name="Hunkapiller M.W."/>
            <person name="Myers E.W."/>
            <person name="Venter J.C."/>
        </authorList>
    </citation>
    <scope>NUCLEOTIDE SEQUENCE [LARGE SCALE GENOMIC DNA]</scope>
</reference>
<reference key="6">
    <citation type="journal article" date="2004" name="Genome Res.">
        <title>The status, quality, and expansion of the NIH full-length cDNA project: the Mammalian Gene Collection (MGC).</title>
        <authorList>
            <consortium name="The MGC Project Team"/>
        </authorList>
    </citation>
    <scope>NUCLEOTIDE SEQUENCE [LARGE SCALE MRNA] (ISOFORM 1)</scope>
    <source>
        <tissue>Placenta</tissue>
    </source>
</reference>
<reference key="7">
    <citation type="submission" date="2007-07" db="UniProtKB">
        <authorList>
            <person name="Bienvenut W.V."/>
            <person name="Glen H."/>
            <person name="Brunton V.G."/>
            <person name="Frame M.C."/>
        </authorList>
    </citation>
    <scope>PROTEIN SEQUENCE OF 1-11; 304-320 AND 684-695</scope>
    <scope>ACETYLATION AT MET-1</scope>
    <scope>IDENTIFICATION BY MASS SPECTROMETRY</scope>
    <source>
        <tissue>Osteosarcoma</tissue>
    </source>
</reference>
<reference key="8">
    <citation type="journal article" date="1999" name="Int. J. Cancer">
        <title>Antigens recognized by autologous antibody in patients with renal-cell carcinoma.</title>
        <authorList>
            <person name="Scanlan M.J."/>
            <person name="Gordan J.D."/>
            <person name="Williamson B."/>
            <person name="Stockert E."/>
            <person name="Bander N.H."/>
            <person name="Jongeneel C.V."/>
            <person name="Gure A.O."/>
            <person name="Jaeger D."/>
            <person name="Jaeger E."/>
            <person name="Knuth A."/>
            <person name="Chen Y.-T."/>
            <person name="Old L.J."/>
        </authorList>
    </citation>
    <scope>IDENTIFICATION AS A RENAL CANCER ANTIGEN</scope>
    <source>
        <tissue>Renal cell carcinoma</tissue>
    </source>
</reference>
<reference key="9">
    <citation type="journal article" date="2005" name="Biochem. Biophys. Res. Commun.">
        <title>Proteomic identification of proteins conjugated to ISG15 in mouse and human cells.</title>
        <authorList>
            <person name="Giannakopoulos N.V."/>
            <person name="Luo J.K."/>
            <person name="Papov V."/>
            <person name="Zou W."/>
            <person name="Lenschow D.J."/>
            <person name="Jacobs B.S."/>
            <person name="Borden E.C."/>
            <person name="Li J."/>
            <person name="Virgin H.W."/>
            <person name="Zhang D.E."/>
        </authorList>
    </citation>
    <scope>ISGYLATION</scope>
</reference>
<reference key="10">
    <citation type="journal article" date="2008" name="Proc. Natl. Acad. Sci. U.S.A.">
        <title>A quantitative atlas of mitotic phosphorylation.</title>
        <authorList>
            <person name="Dephoure N."/>
            <person name="Zhou C."/>
            <person name="Villen J."/>
            <person name="Beausoleil S.A."/>
            <person name="Bakalarski C.E."/>
            <person name="Elledge S.J."/>
            <person name="Gygi S.P."/>
        </authorList>
    </citation>
    <scope>PHOSPHORYLATION [LARGE SCALE ANALYSIS] AT SER-555</scope>
    <scope>IDENTIFICATION BY MASS SPECTROMETRY [LARGE SCALE ANALYSIS]</scope>
    <source>
        <tissue>Cervix carcinoma</tissue>
    </source>
</reference>
<reference key="11">
    <citation type="journal article" date="2009" name="Anal. Chem.">
        <title>Lys-N and trypsin cover complementary parts of the phosphoproteome in a refined SCX-based approach.</title>
        <authorList>
            <person name="Gauci S."/>
            <person name="Helbig A.O."/>
            <person name="Slijper M."/>
            <person name="Krijgsveld J."/>
            <person name="Heck A.J."/>
            <person name="Mohammed S."/>
        </authorList>
    </citation>
    <scope>ACETYLATION [LARGE SCALE ANALYSIS] AT MET-1</scope>
    <scope>IDENTIFICATION BY MASS SPECTROMETRY [LARGE SCALE ANALYSIS]</scope>
</reference>
<reference key="12">
    <citation type="journal article" date="2009" name="Science">
        <title>The C-Ala domain brings together editing and aminoacylation functions on one tRNA.</title>
        <authorList>
            <person name="Guo M."/>
            <person name="Chong Y.E."/>
            <person name="Beebe K."/>
            <person name="Shapiro R."/>
            <person name="Yang X.-L."/>
            <person name="Schimmel P."/>
        </authorList>
    </citation>
    <scope>DOMAIN EXCHANGE EXPERIMENTS</scope>
</reference>
<reference key="13">
    <citation type="journal article" date="2009" name="Science">
        <title>Lysine acetylation targets protein complexes and co-regulates major cellular functions.</title>
        <authorList>
            <person name="Choudhary C."/>
            <person name="Kumar C."/>
            <person name="Gnad F."/>
            <person name="Nielsen M.L."/>
            <person name="Rehman M."/>
            <person name="Walther T.C."/>
            <person name="Olsen J.V."/>
            <person name="Mann M."/>
        </authorList>
    </citation>
    <scope>ACETYLATION [LARGE SCALE ANALYSIS] AT LYS-19 AND LYS-876</scope>
    <scope>IDENTIFICATION BY MASS SPECTROMETRY [LARGE SCALE ANALYSIS]</scope>
</reference>
<reference key="14">
    <citation type="journal article" date="2010" name="Sci. Signal.">
        <title>Quantitative phosphoproteomics reveals widespread full phosphorylation site occupancy during mitosis.</title>
        <authorList>
            <person name="Olsen J.V."/>
            <person name="Vermeulen M."/>
            <person name="Santamaria A."/>
            <person name="Kumar C."/>
            <person name="Miller M.L."/>
            <person name="Jensen L.J."/>
            <person name="Gnad F."/>
            <person name="Cox J."/>
            <person name="Jensen T.S."/>
            <person name="Nigg E.A."/>
            <person name="Brunak S."/>
            <person name="Mann M."/>
        </authorList>
    </citation>
    <scope>PHOSPHORYLATION [LARGE SCALE ANALYSIS] AT SER-399</scope>
    <scope>IDENTIFICATION BY MASS SPECTROMETRY [LARGE SCALE ANALYSIS]</scope>
    <source>
        <tissue>Cervix carcinoma</tissue>
    </source>
</reference>
<reference key="15">
    <citation type="journal article" date="2011" name="BMC Syst. Biol.">
        <title>Initial characterization of the human central proteome.</title>
        <authorList>
            <person name="Burkard T.R."/>
            <person name="Planyavsky M."/>
            <person name="Kaupe I."/>
            <person name="Breitwieser F.P."/>
            <person name="Buerckstuemmer T."/>
            <person name="Bennett K.L."/>
            <person name="Superti-Furga G."/>
            <person name="Colinge J."/>
        </authorList>
    </citation>
    <scope>IDENTIFICATION BY MASS SPECTROMETRY [LARGE SCALE ANALYSIS]</scope>
</reference>
<reference key="16">
    <citation type="journal article" date="2012" name="Mol. Cell. Proteomics">
        <title>Comparative large-scale characterisation of plant vs. mammal proteins reveals similar and idiosyncratic N-alpha acetylation features.</title>
        <authorList>
            <person name="Bienvenut W.V."/>
            <person name="Sumpton D."/>
            <person name="Martinez A."/>
            <person name="Lilla S."/>
            <person name="Espagne C."/>
            <person name="Meinnel T."/>
            <person name="Giglione C."/>
        </authorList>
    </citation>
    <scope>ACETYLATION [LARGE SCALE ANALYSIS] AT MET-1</scope>
    <scope>IDENTIFICATION BY MASS SPECTROMETRY [LARGE SCALE ANALYSIS]</scope>
</reference>
<reference key="17">
    <citation type="journal article" date="2012" name="Proc. Natl. Acad. Sci. U.S.A.">
        <title>N-terminal acetylome analyses and functional insights of the N-terminal acetyltransferase NatB.</title>
        <authorList>
            <person name="Van Damme P."/>
            <person name="Lasa M."/>
            <person name="Polevoda B."/>
            <person name="Gazquez C."/>
            <person name="Elosegui-Artola A."/>
            <person name="Kim D.S."/>
            <person name="De Juan-Pardo E."/>
            <person name="Demeyer K."/>
            <person name="Hole K."/>
            <person name="Larrea E."/>
            <person name="Timmerman E."/>
            <person name="Prieto J."/>
            <person name="Arnesen T."/>
            <person name="Sherman F."/>
            <person name="Gevaert K."/>
            <person name="Aldabe R."/>
        </authorList>
    </citation>
    <scope>ACETYLATION [LARGE SCALE ANALYSIS] AT MET-1</scope>
    <scope>IDENTIFICATION BY MASS SPECTROMETRY [LARGE SCALE ANALYSIS]</scope>
</reference>
<reference key="18">
    <citation type="journal article" date="2013" name="J. Proteome Res.">
        <title>Toward a comprehensive characterization of a human cancer cell phosphoproteome.</title>
        <authorList>
            <person name="Zhou H."/>
            <person name="Di Palma S."/>
            <person name="Preisinger C."/>
            <person name="Peng M."/>
            <person name="Polat A.N."/>
            <person name="Heck A.J."/>
            <person name="Mohammed S."/>
        </authorList>
    </citation>
    <scope>PHOSPHORYLATION [LARGE SCALE ANALYSIS] AT SER-3; SER-8 AND SER-555</scope>
    <scope>IDENTIFICATION BY MASS SPECTROMETRY [LARGE SCALE ANALYSIS]</scope>
    <source>
        <tissue>Cervix carcinoma</tissue>
        <tissue>Erythroleukemia</tissue>
    </source>
</reference>
<reference key="19">
    <citation type="journal article" date="2014" name="J. Proteomics">
        <title>An enzyme assisted RP-RPLC approach for in-depth analysis of human liver phosphoproteome.</title>
        <authorList>
            <person name="Bian Y."/>
            <person name="Song C."/>
            <person name="Cheng K."/>
            <person name="Dong M."/>
            <person name="Wang F."/>
            <person name="Huang J."/>
            <person name="Sun D."/>
            <person name="Wang L."/>
            <person name="Ye M."/>
            <person name="Zou H."/>
        </authorList>
    </citation>
    <scope>IDENTIFICATION BY MASS SPECTROMETRY [LARGE SCALE ANALYSIS]</scope>
    <source>
        <tissue>Liver</tissue>
    </source>
</reference>
<reference key="20">
    <citation type="journal article" date="2015" name="Am. J. Hum. Genet.">
        <title>Loss-of-function alanyl-tRNA synthetase mutations cause an autosomal-recessive early-onset epileptic encephalopathy with persistent myelination defect.</title>
        <authorList>
            <person name="Simons C."/>
            <person name="Griffin L.B."/>
            <person name="Helman G."/>
            <person name="Golas G."/>
            <person name="Pizzino A."/>
            <person name="Bloom M."/>
            <person name="Murphy J.L."/>
            <person name="Crawford J."/>
            <person name="Evans S.H."/>
            <person name="Topper S."/>
            <person name="Whitehead M.T."/>
            <person name="Schreiber J.M."/>
            <person name="Chapman K.A."/>
            <person name="Tifft C."/>
            <person name="Lu K.B."/>
            <person name="Gamper H."/>
            <person name="Shigematsu M."/>
            <person name="Taft R.J."/>
            <person name="Antonellis A."/>
            <person name="Hou Y.M."/>
            <person name="Vanderver A."/>
        </authorList>
    </citation>
    <scope>BIOPHYSICOCHEMICAL PROPERTIES</scope>
    <scope>INVOLVEMENT IN DEE29</scope>
    <scope>VARIANTS DEE29 THR-81 AND GLY-751</scope>
    <scope>CHARACTERIZATION OF VARIANTS DEE29 THR-81 AND GLY-751</scope>
    <scope>CATALYTIC ACTIVITY</scope>
</reference>
<reference key="21">
    <citation type="journal article" date="2015" name="Proteomics">
        <title>N-terminome analysis of the human mitochondrial proteome.</title>
        <authorList>
            <person name="Vaca Jacome A.S."/>
            <person name="Rabilloud T."/>
            <person name="Schaeffer-Reiss C."/>
            <person name="Rompais M."/>
            <person name="Ayoub D."/>
            <person name="Lane L."/>
            <person name="Bairoch A."/>
            <person name="Van Dorsselaer A."/>
            <person name="Carapito C."/>
        </authorList>
    </citation>
    <scope>IDENTIFICATION BY MASS SPECTROMETRY [LARGE SCALE ANALYSIS]</scope>
</reference>
<reference key="22">
    <citation type="journal article" date="2019" name="Acta Neuropathol. Commun.">
        <title>An AARS variant as the likely cause of Swedish type hereditary diffuse leukoencephalopathy with spheroids.</title>
        <authorList>
            <person name="Sundal C."/>
            <person name="Carmona S."/>
            <person name="Yhr M."/>
            <person name="Almstroem O."/>
            <person name="Ljungberg M."/>
            <person name="Hardy J."/>
            <person name="Hedberg-Oldfors C."/>
            <person name="Fred A."/>
            <person name="Bras J."/>
            <person name="Oldfors A."/>
            <person name="Andersen O."/>
            <person name="Guerreiro R."/>
        </authorList>
    </citation>
    <scope>INVOLVEMENT IN HDLS2</scope>
    <scope>VARIANT HDLS2 PHE-152</scope>
</reference>
<reference key="23">
    <citation type="journal article" date="2021" name="Hum. Mol. Genet.">
        <title>Protein instability associated with AARS1 and MARS1 mutations causes trichothiodystrophy.</title>
        <authorList>
            <person name="Botta E."/>
            <person name="Theil A.F."/>
            <person name="Raams A."/>
            <person name="Caligiuri G."/>
            <person name="Giachetti S."/>
            <person name="Bione S."/>
            <person name="Accadia M."/>
            <person name="Lombardi A."/>
            <person name="Smith D.E.C."/>
            <person name="Mendes M.I."/>
            <person name="Swagemakers S.M.A."/>
            <person name="van der Spek P.J."/>
            <person name="Salomons G.S."/>
            <person name="Hoeijmakers J.H.J."/>
            <person name="Yesodharan D."/>
            <person name="Nampoothiri S."/>
            <person name="Ogi T."/>
            <person name="Lehmann A.R."/>
            <person name="Orioli D."/>
            <person name="Vermeulen W."/>
        </authorList>
    </citation>
    <scope>INVOLVEMENT IN TTD8</scope>
    <scope>VARIANTS TTD8 THR-699; ALA-726; ILE-756 AND TYR-901</scope>
    <scope>FUNCTION</scope>
</reference>
<reference key="24">
    <citation type="journal article" date="2024" name="Cell">
        <title>Alanyl-tRNA synthetase, AARS1, is a lactate sensor and lactyltransferase that lactylates p53 and contributes to tumorigenesis.</title>
        <authorList>
            <person name="Zong Z."/>
            <person name="Xie F."/>
            <person name="Wang S."/>
            <person name="Wu X."/>
            <person name="Zhang Z."/>
            <person name="Yang B."/>
            <person name="Zhou F."/>
        </authorList>
    </citation>
    <scope>FUNCTION</scope>
    <scope>CATALYTIC ACTIVITY</scope>
    <scope>ACTIVITY REGULATION</scope>
    <scope>MUTAGENESIS OF MET-46; ARG-77; ASN-216 AND 239-ASP--GLY-241</scope>
</reference>
<reference key="25">
    <citation type="journal article" date="2024" name="J. Clin. Invest.">
        <title>The alanyl-tRNA synthetase AARS1 moonlights as a lactyltransferase to promote YAP signaling in gastric cancer.</title>
        <authorList>
            <person name="Ju J."/>
            <person name="Zhang H."/>
            <person name="Lin M."/>
            <person name="Yan Z."/>
            <person name="An L."/>
            <person name="Cao Z."/>
            <person name="Geng D."/>
            <person name="Yue J."/>
            <person name="Tang Y."/>
            <person name="Tian L."/>
            <person name="Chen F."/>
            <person name="Han Y."/>
            <person name="Wang W."/>
            <person name="Zhao S."/>
            <person name="Jiao S."/>
            <person name="Zhou Z."/>
        </authorList>
    </citation>
    <scope>FUNCTION</scope>
    <scope>CATALYTIC ACTIVITY</scope>
    <scope>SUBCELLULAR LOCATION</scope>
    <scope>MUTAGENESIS OF ARG-77; MET-100; TRP-176; VAL-218; ASP-239 AND 750-ARG--ALA-763</scope>
    <scope>VARIANT GLN-77</scope>
    <scope>CHARACTERIZATION OF VARIANT GLN-77</scope>
</reference>
<reference key="26">
    <citation type="journal article" date="2024" name="Nature">
        <title>AARS1 and AARS2 sense L-lactate to regulate cGAS as global lysine lactyltransferases.</title>
        <authorList>
            <person name="Li H."/>
            <person name="Liu C."/>
            <person name="Li R."/>
            <person name="Zhou L."/>
            <person name="Ran Y."/>
            <person name="Yang Q."/>
            <person name="Huang H."/>
            <person name="Lu H."/>
            <person name="Song H."/>
            <person name="Yang B."/>
            <person name="Ru H."/>
            <person name="Lin S."/>
            <person name="Zhang L."/>
        </authorList>
    </citation>
    <scope>FUNCTION</scope>
    <scope>CATALYTIC ACTIVITY</scope>
    <scope>MUTAGENESIS OF MET-46; ARG-77; TRP-176; ASN-216; 239-ASP--GLY-241 AND GLY-243</scope>
</reference>
<reference evidence="28" key="27">
    <citation type="submission" date="2014-12" db="PDB data bank">
        <title>Crystal structure of wild type human AlaRS catalytic domain.</title>
        <authorList>
            <person name="Zhou H."/>
            <person name="Yang X.L."/>
        </authorList>
    </citation>
    <scope>X-RAY CRYSTALLOGRAPHY (1.28 ANGSTROMS) OF 1-455 IN COMPLEX WITH L-ALANINYL-ADENYLATE ANALOG</scope>
</reference>
<reference evidence="30" key="28">
    <citation type="journal article" date="2016" name="J. Am. Chem. Soc.">
        <title>Evolutionary Gain of Alanine Mischarging to Noncognate tRNAs with a G4:U69 Base Pair.</title>
        <authorList>
            <person name="Sun L."/>
            <person name="Gomes A.C."/>
            <person name="He W."/>
            <person name="Zhou H."/>
            <person name="Wang X."/>
            <person name="Pan D.W."/>
            <person name="Schimmel P."/>
            <person name="Pan T."/>
            <person name="Yang X.L."/>
        </authorList>
    </citation>
    <scope>X-RAY CRYSTALLOGRAPHY (2.68 ANGSTROMS) OF 4-453 IN COMPLEX WITH L-ALANINYL-ADENYLATE ANALOG</scope>
    <scope>CATALYTIC ACTIVITY</scope>
    <scope>FUNCTION</scope>
    <scope>MUTAGENESIS OF ALA-448</scope>
</reference>
<reference evidence="31 32" key="29">
    <citation type="journal article" date="2016" name="Proc. Natl. Acad. Sci. U.S.A.">
        <title>Two crystal structures reveal design for repurposing the C-Ala domain of human AlaRS.</title>
        <authorList>
            <person name="Sun L."/>
            <person name="Song Y."/>
            <person name="Blocquel D."/>
            <person name="Yang X.L."/>
            <person name="Schimmel P."/>
        </authorList>
    </citation>
    <scope>X-RAY CRYSTALLOGRAPHY (2.00 ANGSTROMS) OF 757-965</scope>
    <scope>CATALYTIC ACTIVITY</scope>
    <scope>FUNCTION</scope>
    <scope>DOMAIN</scope>
    <scope>SUBUNIT</scope>
    <scope>SUBCELLULAR LOCATION</scope>
</reference>
<reference evidence="33" key="30">
    <citation type="journal article" date="2017" name="Nat. Commun.">
        <title>Double mimicry evades tRNA synthetase editing by toxic vegetable-sourced non-proteinogenic amino acid.</title>
        <authorList>
            <person name="Song Y."/>
            <person name="Zhou H."/>
            <person name="Vo M.N."/>
            <person name="Shi Y."/>
            <person name="Nawaz M.H."/>
            <person name="Vargas-Rodriguez O."/>
            <person name="Diedrich J.K."/>
            <person name="Yates J.R."/>
            <person name="Kishi S."/>
            <person name="Musier-Forsyth K."/>
            <person name="Schimmel P."/>
        </authorList>
    </citation>
    <scope>X-RAY CRYSTALLOGRAPHY (2.03 ANGSTROMS) OF 1-455 IN COMPLEX WITH AZETIDINE-2-CARBOXYLIC ACID</scope>
</reference>
<reference key="31">
    <citation type="journal article" date="2020" name="J. Biol. Chem.">
        <title>Methyltransferase-like 21C (METTL21C) methylates alanine tRNA synthetase at Lys-943 in muscle tissue.</title>
        <authorList>
            <person name="Zoabi M."/>
            <person name="Zhang L."/>
            <person name="Li T.M."/>
            <person name="Elias J.E."/>
            <person name="Carlson S.M."/>
            <person name="Gozani O."/>
        </authorList>
    </citation>
    <scope>METHYLATION AT LYS-943</scope>
    <scope>MUTAGENESIS OF LYS-943</scope>
</reference>
<reference key="32">
    <citation type="journal article" date="2010" name="Am. J. Hum. Genet.">
        <title>A major determinant for binding and aminoacylation of tRNA(Ala) in cytoplasmic Alanyl-tRNA synthetase is mutated in dominant axonal Charcot-Marie-Tooth disease.</title>
        <authorList>
            <person name="Latour P."/>
            <person name="Thauvin-Robinet C."/>
            <person name="Baudelet-Mery C."/>
            <person name="Soichot P."/>
            <person name="Cusin V."/>
            <person name="Faivre L."/>
            <person name="Locatelli M.C."/>
            <person name="Mayencon M."/>
            <person name="Sarcey A."/>
            <person name="Broussolle E."/>
            <person name="Camu W."/>
            <person name="David A."/>
            <person name="Rousson R."/>
        </authorList>
    </citation>
    <scope>VARIANT CMT2N HIS-329</scope>
</reference>
<reference key="33">
    <citation type="journal article" date="2011" name="PLoS ONE">
        <title>The mutational spectrum in a cohort of Charcot-Marie-Tooth disease type 2 among the Han Chinese in Taiwan.</title>
        <authorList>
            <person name="Lin K.P."/>
            <person name="Soong B.W."/>
            <person name="Yang C.C."/>
            <person name="Huang L.W."/>
            <person name="Chang M.H."/>
            <person name="Lee I.H."/>
            <person name="Antonellis A."/>
            <person name="Lee Y.C."/>
        </authorList>
    </citation>
    <scope>VARIANT CMT2N TYR-71</scope>
</reference>
<reference key="34">
    <citation type="journal article" date="2012" name="Hum. Mutat.">
        <title>A recurrent loss-of-function alanyl-tRNA synthetase (AARS) mutation in patients with Charcot-Marie-Tooth disease type 2N (CMT2N).</title>
        <authorList>
            <person name="McLaughlin H.M."/>
            <person name="Sakaguchi R."/>
            <person name="Giblin W."/>
            <person name="Wilson T.E."/>
            <person name="Biesecker L."/>
            <person name="Lupski J.R."/>
            <person name="Talbot K."/>
            <person name="Vance J.M."/>
            <person name="Zuchner S."/>
            <person name="Lee Y.C."/>
            <person name="Kennerson M."/>
            <person name="Hou Y.M."/>
            <person name="Nicholson G."/>
            <person name="Antonellis A."/>
        </authorList>
    </citation>
    <scope>VARIANT CMT2N HIS-329</scope>
    <scope>CHARACTERIZATION OF VARIANT CMT2N HIS-329</scope>
</reference>
<reference key="35">
    <citation type="journal article" date="2014" name="J. Neurol.">
        <title>Whole-exome sequencing in patients with inherited neuropathies: outcome and challenges.</title>
        <authorList>
            <person name="Schabhuettl M."/>
            <person name="Wieland T."/>
            <person name="Senderek J."/>
            <person name="Baets J."/>
            <person name="Timmerman V."/>
            <person name="De Jonghe P."/>
            <person name="Reilly M.M."/>
            <person name="Stieglbauer K."/>
            <person name="Laich E."/>
            <person name="Windhager R."/>
            <person name="Erwa W."/>
            <person name="Trajanoski S."/>
            <person name="Strom T.M."/>
            <person name="Auer-Grumbach M."/>
        </authorList>
    </citation>
    <scope>VARIANT MET-608</scope>
</reference>
<reference key="36">
    <citation type="journal article" date="2017" name="Hum. Mutat.">
        <title>Deficient activity of alanyl-tRNA synthetase underlies an autosomal recessive syndrome of progressive microcephaly, hypomyelination, and epileptic encephalopathy.</title>
        <authorList>
            <person name="Nakayama T."/>
            <person name="Wu J."/>
            <person name="Galvin-Parton P."/>
            <person name="Weiss J."/>
            <person name="Andriola M.R."/>
            <person name="Hill R.S."/>
            <person name="Vaughan D.J."/>
            <person name="El-Quessny M."/>
            <person name="Barry B.J."/>
            <person name="Partlow J.N."/>
            <person name="Barkovich A.J."/>
            <person name="Ling J."/>
            <person name="Mochida G.H."/>
        </authorList>
    </citation>
    <scope>VARIANT DEE29 ASP-913</scope>
    <scope>CHARACTERIZATION OF VARIANT DEE29 ASP-913</scope>
    <scope>FUNCTION</scope>
    <scope>CATALYTIC ACTIVITY</scope>
    <scope>MUTAGENESIS OF CYS-723</scope>
</reference>
<reference key="37">
    <citation type="journal article" date="2022" name="BMC Neurol.">
        <title>Clinical characteristics and proteome modifications in two Charcot-Marie-Tooth families with the AARS1 Arg326Trp mutation.</title>
        <authorList>
            <person name="Hoeyer H."/>
            <person name="Busk O.L."/>
            <person name="Esbensen Q.Y."/>
            <person name="Roesby O."/>
            <person name="Hilmarsen H.T."/>
            <person name="Russell M.B."/>
            <person name="Nyman T.A."/>
            <person name="Braathen G.J."/>
            <person name="Nilsen H.L."/>
        </authorList>
    </citation>
    <scope>VARIANT CMT2N TRP-326</scope>
</reference>
<reference key="38">
    <citation type="journal article" date="2022" name="Front. Pediatr.">
        <title>Case Report: Early-Onset Charcot-Marie-Tooth 2N With Reversible White Matter Lesions Repeatedly Mimicked Stroke or Encephalitis.</title>
        <authorList>
            <person name="Huang H."/>
            <person name="Zhang Y."/>
            <person name="Yang M."/>
            <person name="Lian B."/>
            <person name="Guo R."/>
            <person name="Cao L."/>
        </authorList>
    </citation>
    <scope>VARIANT CMT2N PHE-698</scope>
</reference>
<reference key="39">
    <citation type="journal article" date="2023" name="Transl. Neurodegener.">
        <title>An AARS1 variant identified to cause adult-onset leukoencephalopathy with neuroaxonal spheroids and pigmented glia.</title>
        <authorList>
            <person name="Wu J."/>
            <person name="Liu T."/>
            <person name="Zhang B."/>
            <person name="Liu C."/>
            <person name="Luan X."/>
            <person name="Cao L."/>
        </authorList>
    </citation>
    <scope>VARIANT HDLS2 ILE-606</scope>
</reference>